<sequence>MIGLVGKKVGMTRIFTEDGVSIPVTVIEVEANRVTQVKDLANDGYRAIQVTTGAKKANRVTKPEAGHFAKAGVEAGRGLWEFRLAEGEEFTVGQSISVELFADVKKVDVTGTSKGKGFAGTVKRWNFRTQDATHGNSLSHRVPGSIGQNQTPGKVFKGKKMAGQMGNERVTVQSLDVVRVDAERNLLLVKGAVPGATGSDLIVKPAVKA</sequence>
<organism>
    <name type="scientific">Escherichia coli (strain K12)</name>
    <dbReference type="NCBI Taxonomy" id="83333"/>
    <lineage>
        <taxon>Bacteria</taxon>
        <taxon>Pseudomonadati</taxon>
        <taxon>Pseudomonadota</taxon>
        <taxon>Gammaproteobacteria</taxon>
        <taxon>Enterobacterales</taxon>
        <taxon>Enterobacteriaceae</taxon>
        <taxon>Escherichia</taxon>
    </lineage>
</organism>
<reference key="1">
    <citation type="journal article" date="1978" name="FEBS Lett.">
        <title>The primary structure of ribosomal protein L3 from Escherichia coli 70 S ribosomes.</title>
        <authorList>
            <person name="Muranova T.A."/>
            <person name="Muranov A.V."/>
            <person name="Markova L.F."/>
            <person name="Ovchinnikov Y.A."/>
        </authorList>
    </citation>
    <scope>PROTEIN SEQUENCE</scope>
    <scope>SUBUNIT</scope>
    <scope>METHYLATION AT GLN-150</scope>
    <source>
        <strain>MRE-600</strain>
    </source>
</reference>
<reference key="2">
    <citation type="journal article" date="1985" name="Nucleic Acids Res.">
        <title>Structure of the Escherichia coli S10 ribosomal protein operon.</title>
        <authorList>
            <person name="Zurawski G."/>
            <person name="Zurawski S.M."/>
        </authorList>
    </citation>
    <scope>NUCLEOTIDE SEQUENCE [GENOMIC DNA]</scope>
</reference>
<reference key="3">
    <citation type="journal article" date="1997" name="Science">
        <title>The complete genome sequence of Escherichia coli K-12.</title>
        <authorList>
            <person name="Blattner F.R."/>
            <person name="Plunkett G. III"/>
            <person name="Bloch C.A."/>
            <person name="Perna N.T."/>
            <person name="Burland V."/>
            <person name="Riley M."/>
            <person name="Collado-Vides J."/>
            <person name="Glasner J.D."/>
            <person name="Rode C.K."/>
            <person name="Mayhew G.F."/>
            <person name="Gregor J."/>
            <person name="Davis N.W."/>
            <person name="Kirkpatrick H.A."/>
            <person name="Goeden M.A."/>
            <person name="Rose D.J."/>
            <person name="Mau B."/>
            <person name="Shao Y."/>
        </authorList>
    </citation>
    <scope>NUCLEOTIDE SEQUENCE [LARGE SCALE GENOMIC DNA]</scope>
    <source>
        <strain>K12 / MG1655 / ATCC 47076</strain>
    </source>
</reference>
<reference key="4">
    <citation type="journal article" date="2006" name="Mol. Syst. Biol.">
        <title>Highly accurate genome sequences of Escherichia coli K-12 strains MG1655 and W3110.</title>
        <authorList>
            <person name="Hayashi K."/>
            <person name="Morooka N."/>
            <person name="Yamamoto Y."/>
            <person name="Fujita K."/>
            <person name="Isono K."/>
            <person name="Choi S."/>
            <person name="Ohtsubo E."/>
            <person name="Baba T."/>
            <person name="Wanner B.L."/>
            <person name="Mori H."/>
            <person name="Horiuchi T."/>
        </authorList>
    </citation>
    <scope>NUCLEOTIDE SEQUENCE [LARGE SCALE GENOMIC DNA]</scope>
    <source>
        <strain>K12 / W3110 / ATCC 27325 / DSM 5911</strain>
    </source>
</reference>
<reference key="5">
    <citation type="journal article" date="1981" name="Cell">
        <title>Regulation of the S10 ribosomal protein operon in E. coli: nucleotide sequence at the start of the operon.</title>
        <authorList>
            <person name="Olins P.O."/>
            <person name="Nomura M."/>
        </authorList>
    </citation>
    <scope>NUCLEOTIDE SEQUENCE [GENOMIC DNA] OF 1-80</scope>
</reference>
<reference key="6">
    <citation type="journal article" date="1997" name="Electrophoresis">
        <title>Comparing the predicted and observed properties of proteins encoded in the genome of Escherichia coli K-12.</title>
        <authorList>
            <person name="Link A.J."/>
            <person name="Robison K."/>
            <person name="Church G.M."/>
        </authorList>
    </citation>
    <scope>PROTEIN SEQUENCE OF 1-12</scope>
    <source>
        <strain>K12 / EMG2</strain>
    </source>
</reference>
<reference key="7">
    <citation type="journal article" date="1977" name="Mol. Gen. Genet.">
        <title>Genetics of ribosomal protein methylation in Escherichia coli. II. A mutant lacking a new type of methylated amino acid, N5-methylglutamine, in protein L3.</title>
        <authorList>
            <person name="Lhoest J."/>
            <person name="Colson C."/>
        </authorList>
    </citation>
    <scope>METHYLATION BY PRMB</scope>
    <source>
        <strain>K12</strain>
    </source>
</reference>
<reference key="8">
    <citation type="journal article" date="1982" name="Proc. Natl. Acad. Sci. U.S.A.">
        <title>Initiator proteins for the assembly of the 50S subunit from Escherichia coli ribosomes.</title>
        <authorList>
            <person name="Nowotny V."/>
            <person name="Nierhaus K.H."/>
        </authorList>
    </citation>
    <scope>IDENTIFICATION AS AN ASSEMBLY INITIATOR PROTEIN</scope>
</reference>
<reference key="9">
    <citation type="journal article" date="1987" name="J. Biol. Chem.">
        <title>Incorporation of six additional proteins to complete the assembly map of the 50 S subunit from Escherichia coli ribosomes.</title>
        <authorList>
            <person name="Herold M."/>
            <person name="Nierhaus K.H."/>
        </authorList>
    </citation>
    <scope>ASSEMBLY MAP OF THE 50S SUBUNIT</scope>
    <source>
        <strain>K12</strain>
    </source>
</reference>
<reference key="10">
    <citation type="journal article" date="1997" name="Electrophoresis">
        <title>Escherichia coli proteome analysis using the gene-protein database.</title>
        <authorList>
            <person name="VanBogelen R.A."/>
            <person name="Abshire K.Z."/>
            <person name="Moldover B."/>
            <person name="Olson E.R."/>
            <person name="Neidhardt F.C."/>
        </authorList>
    </citation>
    <scope>IDENTIFICATION BY 2D-GEL</scope>
</reference>
<reference key="11">
    <citation type="journal article" date="1999" name="Anal. Biochem.">
        <title>Observation of Escherichia coli ribosomal proteins and their posttranslational modifications by mass spectrometry.</title>
        <authorList>
            <person name="Arnold R.J."/>
            <person name="Reilly J.P."/>
        </authorList>
    </citation>
    <scope>MASS SPECTROMETRY</scope>
    <scope>SUBUNIT</scope>
    <source>
        <strain>K12 / ATCC 25404 / DSM 5698 / NCIMB 11290</strain>
    </source>
</reference>
<reference key="12">
    <citation type="journal article" date="2002" name="EMBO J.">
        <title>The hemK gene in Escherichia coli encodes the N(5)-glutamine methyltransferase that modifies peptide release factors.</title>
        <authorList>
            <person name="Heurgue-Hamard V."/>
            <person name="Champ S."/>
            <person name="Engstroem A."/>
            <person name="Ehrenberg M."/>
            <person name="Buckingham R.H."/>
        </authorList>
    </citation>
    <scope>METHYLATION BY PRMB</scope>
    <source>
        <strain>K12</strain>
    </source>
</reference>
<reference key="13">
    <citation type="journal article" date="2011" name="Nat. Chem. Biol.">
        <title>Identification of lysine succinylation as a new post-translational modification.</title>
        <authorList>
            <person name="Zhang Z."/>
            <person name="Tan M."/>
            <person name="Xie Z."/>
            <person name="Dai L."/>
            <person name="Chen Y."/>
            <person name="Zhao Y."/>
        </authorList>
    </citation>
    <scope>SUCCINYLATION AT LYS-38</scope>
    <source>
        <strain>K12</strain>
    </source>
</reference>
<reference key="14">
    <citation type="journal article" date="2014" name="Curr. Opin. Struct. Biol.">
        <title>A new system for naming ribosomal proteins.</title>
        <authorList>
            <person name="Ban N."/>
            <person name="Beckmann R."/>
            <person name="Cate J.H.D."/>
            <person name="Dinman J.D."/>
            <person name="Dragon F."/>
            <person name="Ellis S.R."/>
            <person name="Lafontaine D.L.J."/>
            <person name="Lindahl L."/>
            <person name="Liljas A."/>
            <person name="Lipton J.M."/>
            <person name="McAlear M.A."/>
            <person name="Moore P.B."/>
            <person name="Noller H.F."/>
            <person name="Ortega J."/>
            <person name="Panse V.G."/>
            <person name="Ramakrishnan V."/>
            <person name="Spahn C.M.T."/>
            <person name="Steitz T.A."/>
            <person name="Tchorzewski M."/>
            <person name="Tollervey D."/>
            <person name="Warren A.J."/>
            <person name="Williamson J.R."/>
            <person name="Wilson D."/>
            <person name="Yonath A."/>
            <person name="Yusupov M."/>
        </authorList>
    </citation>
    <scope>NOMENCLATURE</scope>
</reference>
<reference key="15">
    <citation type="journal article" date="2018" name="Int. J. Biol. Macromol.">
        <title>Identification of functional interactome of a key cell division regulatory protein CedA of E.coli.</title>
        <authorList>
            <person name="Sharma P."/>
            <person name="Tomar A.K."/>
            <person name="Kundu B."/>
        </authorList>
    </citation>
    <scope>INTERACTION WITH CEDA</scope>
</reference>
<reference key="16">
    <citation type="journal article" date="2003" name="Cell">
        <title>Study of the structural dynamics of the E. coli 70S ribosome using real-space refinement.</title>
        <authorList>
            <person name="Gao H."/>
            <person name="Sengupta J."/>
            <person name="Valle M."/>
            <person name="Korostelev A."/>
            <person name="Eswar N."/>
            <person name="Stagg S.M."/>
            <person name="Van Roey P."/>
            <person name="Agrawal R.K."/>
            <person name="Harvey S.C."/>
            <person name="Sali A."/>
            <person name="Chapman M.S."/>
            <person name="Frank J."/>
        </authorList>
    </citation>
    <scope>STRUCTURE BY ELECTRON MICROSCOPY (11.50 ANGSTROMS)</scope>
    <scope>SUBUNIT</scope>
    <source>
        <strain>MRE-600</strain>
    </source>
</reference>
<reference key="17">
    <citation type="journal article" date="2005" name="Science">
        <title>Structures of the bacterial ribosome at 3.5 A resolution.</title>
        <authorList>
            <person name="Schuwirth B.S."/>
            <person name="Borovinskaya M.A."/>
            <person name="Hau C.W."/>
            <person name="Zhang W."/>
            <person name="Vila-Sanjurjo A."/>
            <person name="Holton J.M."/>
            <person name="Cate J.H.D."/>
        </authorList>
    </citation>
    <scope>X-RAY CRYSTALLOGRAPHY (3.46 ANGSTROMS) OF 2 DIFFERENT RIBOSOME STRUCTURES</scope>
    <scope>SUBUNIT</scope>
    <source>
        <strain>MRE-600</strain>
    </source>
</reference>
<reference key="18">
    <citation type="journal article" date="2014" name="Cell Rep.">
        <title>Molecular basis for the ribosome functioning as an L-tryptophan sensor.</title>
        <authorList>
            <person name="Bischoff L."/>
            <person name="Berninghausen O."/>
            <person name="Beckmann R."/>
        </authorList>
    </citation>
    <scope>STRUCTURE BY ELECTRON MICROSCOPY (3.80 ANGSTROMS) OF TNAC-STALLED 50S RIBOSOMAL SUBUNIT</scope>
    <scope>SUBUNIT</scope>
    <source>
        <strain>K12 / A19 / KC6</strain>
    </source>
</reference>
<reference key="19">
    <citation type="journal article" date="2014" name="PLoS Biol.">
        <title>Structural and functional insights into the mode of action of a universally conserved Obg GTPase.</title>
        <authorList>
            <person name="Feng B."/>
            <person name="Mandava C.S."/>
            <person name="Guo Q."/>
            <person name="Wang J."/>
            <person name="Cao W."/>
            <person name="Li N."/>
            <person name="Zhang Y."/>
            <person name="Zhang Y."/>
            <person name="Wang Z."/>
            <person name="Wu J."/>
            <person name="Sanyal S."/>
            <person name="Lei J."/>
            <person name="Gao N."/>
        </authorList>
    </citation>
    <scope>STRUCTURE BY ELECTRON MICROSCOPY (5.5 ANGSTROMS) OF 50S RIBOSOMAL SUBUNIT IN COMPLEX WITH OBGE AND GMP-PNP</scope>
    <scope>SUBUNIT</scope>
</reference>
<reference key="20">
    <citation type="journal article" date="2017" name="Nature">
        <title>Mechanistic insights into the alternative translation termination by ArfA and RF2.</title>
        <authorList>
            <person name="Ma C."/>
            <person name="Kurita D."/>
            <person name="Li N."/>
            <person name="Chen Y."/>
            <person name="Himeno H."/>
            <person name="Gao N."/>
        </authorList>
    </citation>
    <scope>STRUCTURE BY ELECTRON MICROSCOPY (3.0 ANGSTROMS) OF 70S RIBOSOME IN COMPLEX WITH ARFA AND RF2</scope>
    <scope>SUBUNIT</scope>
</reference>
<reference key="21">
    <citation type="journal article" date="2017" name="Nature">
        <title>Structural basis for ArfA-RF2-mediated translation termination on mRNAs lacking stop codons.</title>
        <authorList>
            <person name="Huter P."/>
            <person name="Mueller C."/>
            <person name="Beckert B."/>
            <person name="Arenz S."/>
            <person name="Berninghausen O."/>
            <person name="Beckmann R."/>
            <person name="Wilson D.N."/>
        </authorList>
    </citation>
    <scope>STRUCTURE BY ELECTRON MICROSCOPY (3.1 ANGSTROMS) OF 70S RIBOSOME IN COMPLEX WITH ARFA AND RF2</scope>
    <scope>SUBUNIT</scope>
</reference>
<reference key="22">
    <citation type="journal article" date="2016" name="Science">
        <title>Translational termination without a stop codon.</title>
        <authorList>
            <person name="James N.R."/>
            <person name="Brown A."/>
            <person name="Gordiyenko Y."/>
            <person name="Ramakrishnan V."/>
        </authorList>
    </citation>
    <scope>STRUCTURE BY ELECTRON MICROSCOPY (2.97 ANGSTROMS) OF 70S RIBOSOME IN COMPLEX WITH ARFA AND RF2</scope>
    <scope>SUBUNIT</scope>
</reference>
<reference key="23">
    <citation type="journal article" date="2017" name="Nature">
        <title>Structural basis of co-translational quality control by ArfA and RF2 bound to ribosome.</title>
        <authorList>
            <person name="Zeng F."/>
            <person name="Chen Y."/>
            <person name="Remis J."/>
            <person name="Shekhar M."/>
            <person name="Phillips J.C."/>
            <person name="Tajkhorshid E."/>
            <person name="Jin H."/>
        </authorList>
    </citation>
    <scope>STRUCTURE BY ELECTRON MICROSCOPY (3.52 ANGSTROMS) OF 70S RIBOSOME IN COMPLEX WITH ARFA AND RF2</scope>
    <scope>SUBUNIT</scope>
</reference>
<keyword id="KW-0002">3D-structure</keyword>
<keyword id="KW-0903">Direct protein sequencing</keyword>
<keyword id="KW-0488">Methylation</keyword>
<keyword id="KW-1185">Reference proteome</keyword>
<keyword id="KW-0687">Ribonucleoprotein</keyword>
<keyword id="KW-0689">Ribosomal protein</keyword>
<keyword id="KW-0694">RNA-binding</keyword>
<keyword id="KW-0699">rRNA-binding</keyword>
<dbReference type="EMBL" id="X02613">
    <property type="protein sequence ID" value="CAA26460.1"/>
    <property type="molecule type" value="Genomic_DNA"/>
</dbReference>
<dbReference type="EMBL" id="U18997">
    <property type="protein sequence ID" value="AAA58117.1"/>
    <property type="molecule type" value="Genomic_DNA"/>
</dbReference>
<dbReference type="EMBL" id="U00096">
    <property type="protein sequence ID" value="AAC76345.1"/>
    <property type="molecule type" value="Genomic_DNA"/>
</dbReference>
<dbReference type="EMBL" id="AP009048">
    <property type="protein sequence ID" value="BAE77971.1"/>
    <property type="molecule type" value="Genomic_DNA"/>
</dbReference>
<dbReference type="EMBL" id="V00344">
    <property type="protein sequence ID" value="CAA23634.1"/>
    <property type="molecule type" value="Genomic_DNA"/>
</dbReference>
<dbReference type="PIR" id="A02757">
    <property type="entry name" value="R5EC3"/>
</dbReference>
<dbReference type="RefSeq" id="NP_417779.1">
    <property type="nucleotide sequence ID" value="NC_000913.3"/>
</dbReference>
<dbReference type="RefSeq" id="WP_000579833.1">
    <property type="nucleotide sequence ID" value="NZ_STEB01000038.1"/>
</dbReference>
<dbReference type="PDB" id="1ML5">
    <property type="method" value="EM"/>
    <property type="resolution" value="14.00 A"/>
    <property type="chains" value="e=2-209"/>
</dbReference>
<dbReference type="PDB" id="2J28">
    <property type="method" value="EM"/>
    <property type="resolution" value="8.00 A"/>
    <property type="chains" value="D=1-209"/>
</dbReference>
<dbReference type="PDB" id="2RDO">
    <property type="method" value="EM"/>
    <property type="resolution" value="9.10 A"/>
    <property type="chains" value="D=1-209"/>
</dbReference>
<dbReference type="PDB" id="3BBX">
    <property type="method" value="EM"/>
    <property type="resolution" value="10.00 A"/>
    <property type="chains" value="D=1-209"/>
</dbReference>
<dbReference type="PDB" id="3IY9">
    <property type="method" value="EM"/>
    <property type="resolution" value="14.10 A"/>
    <property type="chains" value="C=1-209"/>
</dbReference>
<dbReference type="PDB" id="3J5L">
    <property type="method" value="EM"/>
    <property type="resolution" value="6.60 A"/>
    <property type="chains" value="D=1-209"/>
</dbReference>
<dbReference type="PDB" id="3J7Z">
    <property type="method" value="EM"/>
    <property type="resolution" value="3.90 A"/>
    <property type="chains" value="D=1-209"/>
</dbReference>
<dbReference type="PDB" id="3J8G">
    <property type="method" value="EM"/>
    <property type="resolution" value="5.00 A"/>
    <property type="chains" value="D=1-209"/>
</dbReference>
<dbReference type="PDB" id="3J9Y">
    <property type="method" value="EM"/>
    <property type="resolution" value="3.90 A"/>
    <property type="chains" value="D=1-209"/>
</dbReference>
<dbReference type="PDB" id="3J9Z">
    <property type="method" value="EM"/>
    <property type="resolution" value="3.60 A"/>
    <property type="chains" value="LX=1-209"/>
</dbReference>
<dbReference type="PDB" id="3JA1">
    <property type="method" value="EM"/>
    <property type="resolution" value="3.60 A"/>
    <property type="chains" value="LE=1-209"/>
</dbReference>
<dbReference type="PDB" id="3JBU">
    <property type="method" value="EM"/>
    <property type="resolution" value="3.64 A"/>
    <property type="chains" value="d=1-209"/>
</dbReference>
<dbReference type="PDB" id="3JBV">
    <property type="method" value="EM"/>
    <property type="resolution" value="3.32 A"/>
    <property type="chains" value="d=1-209"/>
</dbReference>
<dbReference type="PDB" id="3JCD">
    <property type="method" value="EM"/>
    <property type="resolution" value="3.70 A"/>
    <property type="chains" value="D=1-209"/>
</dbReference>
<dbReference type="PDB" id="3JCE">
    <property type="method" value="EM"/>
    <property type="resolution" value="3.20 A"/>
    <property type="chains" value="D=1-209"/>
</dbReference>
<dbReference type="PDB" id="3JCJ">
    <property type="method" value="EM"/>
    <property type="resolution" value="3.70 A"/>
    <property type="chains" value="C=1-209"/>
</dbReference>
<dbReference type="PDB" id="3JCN">
    <property type="method" value="EM"/>
    <property type="resolution" value="4.60 A"/>
    <property type="chains" value="D=1-209"/>
</dbReference>
<dbReference type="PDB" id="4CSU">
    <property type="method" value="EM"/>
    <property type="resolution" value="5.50 A"/>
    <property type="chains" value="D=1-209"/>
</dbReference>
<dbReference type="PDB" id="4U1U">
    <property type="method" value="X-ray"/>
    <property type="resolution" value="2.95 A"/>
    <property type="chains" value="BD/DD=1-209"/>
</dbReference>
<dbReference type="PDB" id="4U1V">
    <property type="method" value="X-ray"/>
    <property type="resolution" value="3.00 A"/>
    <property type="chains" value="BD/DD=1-209"/>
</dbReference>
<dbReference type="PDB" id="4U20">
    <property type="method" value="X-ray"/>
    <property type="resolution" value="2.90 A"/>
    <property type="chains" value="BD/DD=1-209"/>
</dbReference>
<dbReference type="PDB" id="4U24">
    <property type="method" value="X-ray"/>
    <property type="resolution" value="2.90 A"/>
    <property type="chains" value="BD/DD=1-209"/>
</dbReference>
<dbReference type="PDB" id="4U25">
    <property type="method" value="X-ray"/>
    <property type="resolution" value="2.90 A"/>
    <property type="chains" value="BD/DD=1-209"/>
</dbReference>
<dbReference type="PDB" id="4U26">
    <property type="method" value="X-ray"/>
    <property type="resolution" value="2.80 A"/>
    <property type="chains" value="BD/DD=1-209"/>
</dbReference>
<dbReference type="PDB" id="4U27">
    <property type="method" value="X-ray"/>
    <property type="resolution" value="2.80 A"/>
    <property type="chains" value="BD/DD=1-209"/>
</dbReference>
<dbReference type="PDB" id="4UY8">
    <property type="method" value="EM"/>
    <property type="resolution" value="3.80 A"/>
    <property type="chains" value="D=1-209"/>
</dbReference>
<dbReference type="PDB" id="4V47">
    <property type="method" value="EM"/>
    <property type="resolution" value="12.30 A"/>
    <property type="chains" value="AB=1-209"/>
</dbReference>
<dbReference type="PDB" id="4V48">
    <property type="method" value="EM"/>
    <property type="resolution" value="11.50 A"/>
    <property type="chains" value="AB=1-209"/>
</dbReference>
<dbReference type="PDB" id="4V4H">
    <property type="method" value="X-ray"/>
    <property type="resolution" value="3.46 A"/>
    <property type="chains" value="BD/DD=1-209"/>
</dbReference>
<dbReference type="PDB" id="4V4Q">
    <property type="method" value="X-ray"/>
    <property type="resolution" value="3.46 A"/>
    <property type="chains" value="BD/DD=1-209"/>
</dbReference>
<dbReference type="PDB" id="4V4V">
    <property type="method" value="EM"/>
    <property type="resolution" value="15.00 A"/>
    <property type="chains" value="BB=1-209"/>
</dbReference>
<dbReference type="PDB" id="4V4W">
    <property type="method" value="EM"/>
    <property type="resolution" value="15.00 A"/>
    <property type="chains" value="BB=1-209"/>
</dbReference>
<dbReference type="PDB" id="4V50">
    <property type="method" value="X-ray"/>
    <property type="resolution" value="3.22 A"/>
    <property type="chains" value="BD/DD=1-209"/>
</dbReference>
<dbReference type="PDB" id="4V52">
    <property type="method" value="X-ray"/>
    <property type="resolution" value="3.21 A"/>
    <property type="chains" value="BD/DD=1-209"/>
</dbReference>
<dbReference type="PDB" id="4V53">
    <property type="method" value="X-ray"/>
    <property type="resolution" value="3.54 A"/>
    <property type="chains" value="BD/DD=1-209"/>
</dbReference>
<dbReference type="PDB" id="4V54">
    <property type="method" value="X-ray"/>
    <property type="resolution" value="3.30 A"/>
    <property type="chains" value="BD/DD=1-209"/>
</dbReference>
<dbReference type="PDB" id="4V55">
    <property type="method" value="X-ray"/>
    <property type="resolution" value="4.00 A"/>
    <property type="chains" value="BD/DD=1-209"/>
</dbReference>
<dbReference type="PDB" id="4V56">
    <property type="method" value="X-ray"/>
    <property type="resolution" value="3.93 A"/>
    <property type="chains" value="BD/DD=1-209"/>
</dbReference>
<dbReference type="PDB" id="4V57">
    <property type="method" value="X-ray"/>
    <property type="resolution" value="3.50 A"/>
    <property type="chains" value="BD/DD=1-209"/>
</dbReference>
<dbReference type="PDB" id="4V5B">
    <property type="method" value="X-ray"/>
    <property type="resolution" value="3.74 A"/>
    <property type="chains" value="AD/CD=1-209"/>
</dbReference>
<dbReference type="PDB" id="4V5H">
    <property type="method" value="EM"/>
    <property type="resolution" value="5.80 A"/>
    <property type="chains" value="BD=1-209"/>
</dbReference>
<dbReference type="PDB" id="4V5Y">
    <property type="method" value="X-ray"/>
    <property type="resolution" value="4.45 A"/>
    <property type="chains" value="BD/DD=1-209"/>
</dbReference>
<dbReference type="PDB" id="4V64">
    <property type="method" value="X-ray"/>
    <property type="resolution" value="3.50 A"/>
    <property type="chains" value="BD/DD=1-209"/>
</dbReference>
<dbReference type="PDB" id="4V65">
    <property type="method" value="EM"/>
    <property type="resolution" value="9.00 A"/>
    <property type="chains" value="BY=1-209"/>
</dbReference>
<dbReference type="PDB" id="4V66">
    <property type="method" value="EM"/>
    <property type="resolution" value="9.00 A"/>
    <property type="chains" value="BY=1-209"/>
</dbReference>
<dbReference type="PDB" id="4V69">
    <property type="method" value="EM"/>
    <property type="resolution" value="6.70 A"/>
    <property type="chains" value="BD=1-209"/>
</dbReference>
<dbReference type="PDB" id="4V6C">
    <property type="method" value="X-ray"/>
    <property type="resolution" value="3.19 A"/>
    <property type="chains" value="BD/DD=1-209"/>
</dbReference>
<dbReference type="PDB" id="4V6D">
    <property type="method" value="X-ray"/>
    <property type="resolution" value="3.81 A"/>
    <property type="chains" value="BD/DD=1-209"/>
</dbReference>
<dbReference type="PDB" id="4V6E">
    <property type="method" value="X-ray"/>
    <property type="resolution" value="3.71 A"/>
    <property type="chains" value="BD/DD=1-209"/>
</dbReference>
<dbReference type="PDB" id="4V6K">
    <property type="method" value="EM"/>
    <property type="resolution" value="8.25 A"/>
    <property type="chains" value="AE=1-209"/>
</dbReference>
<dbReference type="PDB" id="4V6L">
    <property type="method" value="EM"/>
    <property type="resolution" value="13.20 A"/>
    <property type="chains" value="BE=1-209"/>
</dbReference>
<dbReference type="PDB" id="4V6M">
    <property type="method" value="EM"/>
    <property type="resolution" value="7.10 A"/>
    <property type="chains" value="BD=1-209"/>
</dbReference>
<dbReference type="PDB" id="4V6N">
    <property type="method" value="EM"/>
    <property type="resolution" value="12.10 A"/>
    <property type="chains" value="AE=1-209"/>
</dbReference>
<dbReference type="PDB" id="4V6O">
    <property type="method" value="EM"/>
    <property type="resolution" value="14.70 A"/>
    <property type="chains" value="BE=1-209"/>
</dbReference>
<dbReference type="PDB" id="4V6P">
    <property type="method" value="EM"/>
    <property type="resolution" value="13.50 A"/>
    <property type="chains" value="BE=1-209"/>
</dbReference>
<dbReference type="PDB" id="4V6Q">
    <property type="method" value="EM"/>
    <property type="resolution" value="11.50 A"/>
    <property type="chains" value="BE=1-209"/>
</dbReference>
<dbReference type="PDB" id="4V6R">
    <property type="method" value="EM"/>
    <property type="resolution" value="11.50 A"/>
    <property type="chains" value="BE=1-209"/>
</dbReference>
<dbReference type="PDB" id="4V6S">
    <property type="method" value="EM"/>
    <property type="resolution" value="13.10 A"/>
    <property type="chains" value="AE=1-209"/>
</dbReference>
<dbReference type="PDB" id="4V6T">
    <property type="method" value="EM"/>
    <property type="resolution" value="8.30 A"/>
    <property type="chains" value="BD=1-209"/>
</dbReference>
<dbReference type="PDB" id="4V6V">
    <property type="method" value="EM"/>
    <property type="resolution" value="9.80 A"/>
    <property type="chains" value="BE=1-209"/>
</dbReference>
<dbReference type="PDB" id="4V6Y">
    <property type="method" value="EM"/>
    <property type="resolution" value="12.00 A"/>
    <property type="chains" value="BD=1-209"/>
</dbReference>
<dbReference type="PDB" id="4V6Z">
    <property type="method" value="EM"/>
    <property type="resolution" value="12.00 A"/>
    <property type="chains" value="BD=1-209"/>
</dbReference>
<dbReference type="PDB" id="4V70">
    <property type="method" value="EM"/>
    <property type="resolution" value="17.00 A"/>
    <property type="chains" value="BD=1-209"/>
</dbReference>
<dbReference type="PDB" id="4V71">
    <property type="method" value="EM"/>
    <property type="resolution" value="20.00 A"/>
    <property type="chains" value="BD=1-209"/>
</dbReference>
<dbReference type="PDB" id="4V72">
    <property type="method" value="EM"/>
    <property type="resolution" value="13.00 A"/>
    <property type="chains" value="BD=1-209"/>
</dbReference>
<dbReference type="PDB" id="4V73">
    <property type="method" value="EM"/>
    <property type="resolution" value="15.00 A"/>
    <property type="chains" value="BD=1-209"/>
</dbReference>
<dbReference type="PDB" id="4V74">
    <property type="method" value="EM"/>
    <property type="resolution" value="17.00 A"/>
    <property type="chains" value="BD=1-209"/>
</dbReference>
<dbReference type="PDB" id="4V75">
    <property type="method" value="EM"/>
    <property type="resolution" value="12.00 A"/>
    <property type="chains" value="BD=1-209"/>
</dbReference>
<dbReference type="PDB" id="4V76">
    <property type="method" value="EM"/>
    <property type="resolution" value="17.00 A"/>
    <property type="chains" value="BD=1-209"/>
</dbReference>
<dbReference type="PDB" id="4V77">
    <property type="method" value="EM"/>
    <property type="resolution" value="17.00 A"/>
    <property type="chains" value="BD=1-209"/>
</dbReference>
<dbReference type="PDB" id="4V78">
    <property type="method" value="EM"/>
    <property type="resolution" value="20.00 A"/>
    <property type="chains" value="BD=1-209"/>
</dbReference>
<dbReference type="PDB" id="4V79">
    <property type="method" value="EM"/>
    <property type="resolution" value="15.00 A"/>
    <property type="chains" value="BD=1-209"/>
</dbReference>
<dbReference type="PDB" id="4V7A">
    <property type="method" value="EM"/>
    <property type="resolution" value="9.00 A"/>
    <property type="chains" value="BD=1-209"/>
</dbReference>
<dbReference type="PDB" id="4V7B">
    <property type="method" value="EM"/>
    <property type="resolution" value="6.80 A"/>
    <property type="chains" value="BD=1-209"/>
</dbReference>
<dbReference type="PDB" id="4V7C">
    <property type="method" value="EM"/>
    <property type="resolution" value="7.60 A"/>
    <property type="chains" value="BE=1-209"/>
</dbReference>
<dbReference type="PDB" id="4V7D">
    <property type="method" value="EM"/>
    <property type="resolution" value="7.60 A"/>
    <property type="chains" value="AE=1-209"/>
</dbReference>
<dbReference type="PDB" id="4V7I">
    <property type="method" value="EM"/>
    <property type="resolution" value="9.60 A"/>
    <property type="chains" value="AD=1-209"/>
</dbReference>
<dbReference type="PDB" id="4V7S">
    <property type="method" value="X-ray"/>
    <property type="resolution" value="3.25 A"/>
    <property type="chains" value="BD/DD=1-209"/>
</dbReference>
<dbReference type="PDB" id="4V7T">
    <property type="method" value="X-ray"/>
    <property type="resolution" value="3.19 A"/>
    <property type="chains" value="BD/DD=1-209"/>
</dbReference>
<dbReference type="PDB" id="4V7U">
    <property type="method" value="X-ray"/>
    <property type="resolution" value="3.10 A"/>
    <property type="chains" value="BD/DD=1-209"/>
</dbReference>
<dbReference type="PDB" id="4V7V">
    <property type="method" value="X-ray"/>
    <property type="resolution" value="3.29 A"/>
    <property type="chains" value="BD/DD=1-209"/>
</dbReference>
<dbReference type="PDB" id="4V85">
    <property type="method" value="X-ray"/>
    <property type="resolution" value="3.20 A"/>
    <property type="chains" value="BD=1-209"/>
</dbReference>
<dbReference type="PDB" id="4V89">
    <property type="method" value="X-ray"/>
    <property type="resolution" value="3.70 A"/>
    <property type="chains" value="BD=1-209"/>
</dbReference>
<dbReference type="PDB" id="4V9C">
    <property type="method" value="X-ray"/>
    <property type="resolution" value="3.30 A"/>
    <property type="chains" value="BD/DD=1-209"/>
</dbReference>
<dbReference type="PDB" id="4V9D">
    <property type="method" value="X-ray"/>
    <property type="resolution" value="3.00 A"/>
    <property type="chains" value="CD/DD=1-209"/>
</dbReference>
<dbReference type="PDB" id="4V9O">
    <property type="method" value="X-ray"/>
    <property type="resolution" value="2.90 A"/>
    <property type="chains" value="AD/CD/ED/GD=1-209"/>
</dbReference>
<dbReference type="PDB" id="4V9P">
    <property type="method" value="X-ray"/>
    <property type="resolution" value="2.90 A"/>
    <property type="chains" value="AD/CD/ED/GD=1-209"/>
</dbReference>
<dbReference type="PDB" id="4WF1">
    <property type="method" value="X-ray"/>
    <property type="resolution" value="3.09 A"/>
    <property type="chains" value="BD/DD=1-209"/>
</dbReference>
<dbReference type="PDB" id="4WOI">
    <property type="method" value="X-ray"/>
    <property type="resolution" value="3.00 A"/>
    <property type="chains" value="BD/CD=1-209"/>
</dbReference>
<dbReference type="PDB" id="4WWW">
    <property type="method" value="X-ray"/>
    <property type="resolution" value="3.10 A"/>
    <property type="chains" value="RD/YD=1-209"/>
</dbReference>
<dbReference type="PDB" id="4YBB">
    <property type="method" value="X-ray"/>
    <property type="resolution" value="2.10 A"/>
    <property type="chains" value="CD/DD=1-209"/>
</dbReference>
<dbReference type="PDB" id="5ADY">
    <property type="method" value="EM"/>
    <property type="resolution" value="4.50 A"/>
    <property type="chains" value="D=1-209"/>
</dbReference>
<dbReference type="PDB" id="5AFI">
    <property type="method" value="EM"/>
    <property type="resolution" value="2.90 A"/>
    <property type="chains" value="D=1-209"/>
</dbReference>
<dbReference type="PDB" id="5AKA">
    <property type="method" value="EM"/>
    <property type="resolution" value="5.70 A"/>
    <property type="chains" value="D=1-209"/>
</dbReference>
<dbReference type="PDB" id="5GAD">
    <property type="method" value="EM"/>
    <property type="resolution" value="3.70 A"/>
    <property type="chains" value="D=1-209"/>
</dbReference>
<dbReference type="PDB" id="5GAE">
    <property type="method" value="EM"/>
    <property type="resolution" value="3.33 A"/>
    <property type="chains" value="D=1-209"/>
</dbReference>
<dbReference type="PDB" id="5GAF">
    <property type="method" value="EM"/>
    <property type="resolution" value="4.30 A"/>
    <property type="chains" value="D=1-209"/>
</dbReference>
<dbReference type="PDB" id="5GAG">
    <property type="method" value="EM"/>
    <property type="resolution" value="3.80 A"/>
    <property type="chains" value="D=1-209"/>
</dbReference>
<dbReference type="PDB" id="5GAH">
    <property type="method" value="EM"/>
    <property type="resolution" value="3.80 A"/>
    <property type="chains" value="D=1-209"/>
</dbReference>
<dbReference type="PDB" id="5H5U">
    <property type="method" value="EM"/>
    <property type="resolution" value="3.00 A"/>
    <property type="chains" value="D=1-209"/>
</dbReference>
<dbReference type="PDB" id="5IQR">
    <property type="method" value="EM"/>
    <property type="resolution" value="3.00 A"/>
    <property type="chains" value="C=1-209"/>
</dbReference>
<dbReference type="PDB" id="5IT8">
    <property type="method" value="X-ray"/>
    <property type="resolution" value="3.12 A"/>
    <property type="chains" value="CD/DD=1-209"/>
</dbReference>
<dbReference type="PDB" id="5J5B">
    <property type="method" value="X-ray"/>
    <property type="resolution" value="2.80 A"/>
    <property type="chains" value="CD/DD=1-209"/>
</dbReference>
<dbReference type="PDB" id="5J7L">
    <property type="method" value="X-ray"/>
    <property type="resolution" value="3.00 A"/>
    <property type="chains" value="CD/DD=1-209"/>
</dbReference>
<dbReference type="PDB" id="5J88">
    <property type="method" value="X-ray"/>
    <property type="resolution" value="3.32 A"/>
    <property type="chains" value="CD/DD=1-209"/>
</dbReference>
<dbReference type="PDB" id="5J8A">
    <property type="method" value="X-ray"/>
    <property type="resolution" value="3.10 A"/>
    <property type="chains" value="CD/DD=1-209"/>
</dbReference>
<dbReference type="PDB" id="5J91">
    <property type="method" value="X-ray"/>
    <property type="resolution" value="2.96 A"/>
    <property type="chains" value="CD/DD=1-209"/>
</dbReference>
<dbReference type="PDB" id="5JC9">
    <property type="method" value="X-ray"/>
    <property type="resolution" value="3.03 A"/>
    <property type="chains" value="CD/DD=1-209"/>
</dbReference>
<dbReference type="PDB" id="5JTE">
    <property type="method" value="EM"/>
    <property type="resolution" value="3.60 A"/>
    <property type="chains" value="BD=1-209"/>
</dbReference>
<dbReference type="PDB" id="5JU8">
    <property type="method" value="EM"/>
    <property type="resolution" value="3.60 A"/>
    <property type="chains" value="BD=1-209"/>
</dbReference>
<dbReference type="PDB" id="5KCR">
    <property type="method" value="EM"/>
    <property type="resolution" value="3.60 A"/>
    <property type="chains" value="1E=1-209"/>
</dbReference>
<dbReference type="PDB" id="5KCS">
    <property type="method" value="EM"/>
    <property type="resolution" value="3.90 A"/>
    <property type="chains" value="1E=1-209"/>
</dbReference>
<dbReference type="PDB" id="5KPS">
    <property type="method" value="EM"/>
    <property type="resolution" value="3.90 A"/>
    <property type="chains" value="C=1-209"/>
</dbReference>
<dbReference type="PDB" id="5KPV">
    <property type="method" value="EM"/>
    <property type="resolution" value="4.10 A"/>
    <property type="chains" value="B=1-209"/>
</dbReference>
<dbReference type="PDB" id="5KPW">
    <property type="method" value="EM"/>
    <property type="resolution" value="3.90 A"/>
    <property type="chains" value="B=1-209"/>
</dbReference>
<dbReference type="PDB" id="5KPX">
    <property type="method" value="EM"/>
    <property type="resolution" value="3.90 A"/>
    <property type="chains" value="B=1-209"/>
</dbReference>
<dbReference type="PDB" id="5L3P">
    <property type="method" value="EM"/>
    <property type="resolution" value="3.70 A"/>
    <property type="chains" value="E=1-209"/>
</dbReference>
<dbReference type="PDB" id="5LZA">
    <property type="method" value="EM"/>
    <property type="resolution" value="3.60 A"/>
    <property type="chains" value="D=1-209"/>
</dbReference>
<dbReference type="PDB" id="5LZB">
    <property type="method" value="EM"/>
    <property type="resolution" value="5.30 A"/>
    <property type="chains" value="D=1-209"/>
</dbReference>
<dbReference type="PDB" id="5LZC">
    <property type="method" value="EM"/>
    <property type="resolution" value="4.80 A"/>
    <property type="chains" value="D=1-209"/>
</dbReference>
<dbReference type="PDB" id="5LZD">
    <property type="method" value="EM"/>
    <property type="resolution" value="3.40 A"/>
    <property type="chains" value="D=1-209"/>
</dbReference>
<dbReference type="PDB" id="5LZE">
    <property type="method" value="EM"/>
    <property type="resolution" value="3.50 A"/>
    <property type="chains" value="D=1-209"/>
</dbReference>
<dbReference type="PDB" id="5LZF">
    <property type="method" value="EM"/>
    <property type="resolution" value="4.60 A"/>
    <property type="chains" value="D=1-209"/>
</dbReference>
<dbReference type="PDB" id="5MDV">
    <property type="method" value="EM"/>
    <property type="resolution" value="2.97 A"/>
    <property type="chains" value="C=1-209"/>
</dbReference>
<dbReference type="PDB" id="5MDW">
    <property type="method" value="EM"/>
    <property type="resolution" value="3.06 A"/>
    <property type="chains" value="C=1-209"/>
</dbReference>
<dbReference type="PDB" id="5MDY">
    <property type="method" value="EM"/>
    <property type="resolution" value="3.35 A"/>
    <property type="chains" value="C=1-209"/>
</dbReference>
<dbReference type="PDB" id="5MDZ">
    <property type="method" value="EM"/>
    <property type="resolution" value="3.10 A"/>
    <property type="chains" value="C=1-209"/>
</dbReference>
<dbReference type="PDB" id="5MGP">
    <property type="method" value="EM"/>
    <property type="resolution" value="3.10 A"/>
    <property type="chains" value="D=1-209"/>
</dbReference>
<dbReference type="PDB" id="5NCO">
    <property type="method" value="EM"/>
    <property type="resolution" value="4.80 A"/>
    <property type="chains" value="D=1-209"/>
</dbReference>
<dbReference type="PDB" id="5NP6">
    <property type="method" value="EM"/>
    <property type="resolution" value="3.60 A"/>
    <property type="chains" value="b=1-209"/>
</dbReference>
<dbReference type="PDB" id="5NWY">
    <property type="method" value="EM"/>
    <property type="resolution" value="2.93 A"/>
    <property type="chains" value="Q=1-209"/>
</dbReference>
<dbReference type="PDB" id="5O2R">
    <property type="method" value="EM"/>
    <property type="resolution" value="3.40 A"/>
    <property type="chains" value="D=1-209"/>
</dbReference>
<dbReference type="PDB" id="5U4I">
    <property type="method" value="EM"/>
    <property type="resolution" value="3.50 A"/>
    <property type="chains" value="D=1-209"/>
</dbReference>
<dbReference type="PDB" id="5U9F">
    <property type="method" value="EM"/>
    <property type="resolution" value="3.20 A"/>
    <property type="chains" value="05=1-209"/>
</dbReference>
<dbReference type="PDB" id="5U9G">
    <property type="method" value="EM"/>
    <property type="resolution" value="3.20 A"/>
    <property type="chains" value="05=1-209"/>
</dbReference>
<dbReference type="PDB" id="5UYK">
    <property type="method" value="EM"/>
    <property type="resolution" value="3.90 A"/>
    <property type="chains" value="05=1-209"/>
</dbReference>
<dbReference type="PDB" id="5UYL">
    <property type="method" value="EM"/>
    <property type="resolution" value="3.60 A"/>
    <property type="chains" value="05=1-209"/>
</dbReference>
<dbReference type="PDB" id="5UYM">
    <property type="method" value="EM"/>
    <property type="resolution" value="3.20 A"/>
    <property type="chains" value="05=1-209"/>
</dbReference>
<dbReference type="PDB" id="5UYN">
    <property type="method" value="EM"/>
    <property type="resolution" value="4.00 A"/>
    <property type="chains" value="05=1-209"/>
</dbReference>
<dbReference type="PDB" id="5UYP">
    <property type="method" value="EM"/>
    <property type="resolution" value="3.90 A"/>
    <property type="chains" value="05=1-209"/>
</dbReference>
<dbReference type="PDB" id="5UYQ">
    <property type="method" value="EM"/>
    <property type="resolution" value="3.80 A"/>
    <property type="chains" value="05=1-209"/>
</dbReference>
<dbReference type="PDB" id="5WDT">
    <property type="method" value="EM"/>
    <property type="resolution" value="3.00 A"/>
    <property type="chains" value="D=2-209"/>
</dbReference>
<dbReference type="PDB" id="5WE4">
    <property type="method" value="EM"/>
    <property type="resolution" value="3.10 A"/>
    <property type="chains" value="D=2-209"/>
</dbReference>
<dbReference type="PDB" id="5WE6">
    <property type="method" value="EM"/>
    <property type="resolution" value="3.40 A"/>
    <property type="chains" value="D=2-209"/>
</dbReference>
<dbReference type="PDB" id="5WF0">
    <property type="method" value="EM"/>
    <property type="resolution" value="3.60 A"/>
    <property type="chains" value="D=2-209"/>
</dbReference>
<dbReference type="PDB" id="5WFK">
    <property type="method" value="EM"/>
    <property type="resolution" value="3.40 A"/>
    <property type="chains" value="D=2-209"/>
</dbReference>
<dbReference type="PDB" id="5WFS">
    <property type="method" value="EM"/>
    <property type="resolution" value="3.00 A"/>
    <property type="chains" value="D=2-209"/>
</dbReference>
<dbReference type="PDB" id="6BU8">
    <property type="method" value="EM"/>
    <property type="resolution" value="3.50 A"/>
    <property type="chains" value="05=1-209"/>
</dbReference>
<dbReference type="PDB" id="6BY1">
    <property type="method" value="X-ray"/>
    <property type="resolution" value="3.94 A"/>
    <property type="chains" value="CD/DD=1-209"/>
</dbReference>
<dbReference type="PDB" id="6C4H">
    <property type="method" value="EM"/>
    <property type="resolution" value="3.10 A"/>
    <property type="chains" value="D=1-209"/>
</dbReference>
<dbReference type="PDB" id="6C4I">
    <property type="method" value="EM"/>
    <property type="resolution" value="3.24 A"/>
    <property type="chains" value="D=1-209"/>
</dbReference>
<dbReference type="PDB" id="6DNC">
    <property type="method" value="EM"/>
    <property type="resolution" value="3.70 A"/>
    <property type="chains" value="G=1-209"/>
</dbReference>
<dbReference type="PDB" id="6ENF">
    <property type="method" value="EM"/>
    <property type="resolution" value="3.20 A"/>
    <property type="chains" value="D=1-209"/>
</dbReference>
<dbReference type="PDB" id="6ENJ">
    <property type="method" value="EM"/>
    <property type="resolution" value="3.70 A"/>
    <property type="chains" value="D=1-209"/>
</dbReference>
<dbReference type="PDB" id="6ENU">
    <property type="method" value="EM"/>
    <property type="resolution" value="3.10 A"/>
    <property type="chains" value="D=1-209"/>
</dbReference>
<dbReference type="PDB" id="6GBZ">
    <property type="method" value="EM"/>
    <property type="resolution" value="3.80 A"/>
    <property type="chains" value="D=1-209"/>
</dbReference>
<dbReference type="PDB" id="6GC0">
    <property type="method" value="EM"/>
    <property type="resolution" value="3.80 A"/>
    <property type="chains" value="D=1-209"/>
</dbReference>
<dbReference type="PDB" id="6GC4">
    <property type="method" value="EM"/>
    <property type="resolution" value="4.30 A"/>
    <property type="chains" value="D=1-209"/>
</dbReference>
<dbReference type="PDB" id="6GC6">
    <property type="method" value="EM"/>
    <property type="resolution" value="4.30 A"/>
    <property type="chains" value="D=1-209"/>
</dbReference>
<dbReference type="PDB" id="6GC7">
    <property type="method" value="EM"/>
    <property type="resolution" value="4.30 A"/>
    <property type="chains" value="D=1-209"/>
</dbReference>
<dbReference type="PDB" id="6GC8">
    <property type="method" value="EM"/>
    <property type="resolution" value="3.80 A"/>
    <property type="chains" value="D=1-209"/>
</dbReference>
<dbReference type="PDB" id="6GWT">
    <property type="method" value="EM"/>
    <property type="resolution" value="3.80 A"/>
    <property type="chains" value="D=1-209"/>
</dbReference>
<dbReference type="PDB" id="6GXM">
    <property type="method" value="EM"/>
    <property type="resolution" value="3.80 A"/>
    <property type="chains" value="D=1-209"/>
</dbReference>
<dbReference type="PDB" id="6GXN">
    <property type="method" value="EM"/>
    <property type="resolution" value="3.90 A"/>
    <property type="chains" value="D=1-209"/>
</dbReference>
<dbReference type="PDB" id="6GXO">
    <property type="method" value="EM"/>
    <property type="resolution" value="3.90 A"/>
    <property type="chains" value="D=1-209"/>
</dbReference>
<dbReference type="PDB" id="6GXP">
    <property type="method" value="EM"/>
    <property type="resolution" value="4.40 A"/>
    <property type="chains" value="D=1-209"/>
</dbReference>
<dbReference type="PDB" id="6H4N">
    <property type="method" value="EM"/>
    <property type="resolution" value="3.00 A"/>
    <property type="chains" value="D=1-209"/>
</dbReference>
<dbReference type="PDB" id="6H58">
    <property type="method" value="EM"/>
    <property type="resolution" value="7.90 A"/>
    <property type="chains" value="D/DD=1-209"/>
</dbReference>
<dbReference type="PDB" id="6HRM">
    <property type="method" value="EM"/>
    <property type="resolution" value="2.96 A"/>
    <property type="chains" value="C=1-209"/>
</dbReference>
<dbReference type="PDB" id="6I0Y">
    <property type="method" value="EM"/>
    <property type="resolution" value="3.20 A"/>
    <property type="chains" value="D=1-209"/>
</dbReference>
<dbReference type="PDB" id="6I7V">
    <property type="method" value="X-ray"/>
    <property type="resolution" value="2.90 A"/>
    <property type="chains" value="CD/DD=1-209"/>
</dbReference>
<dbReference type="PDB" id="6O9J">
    <property type="method" value="EM"/>
    <property type="resolution" value="3.90 A"/>
    <property type="chains" value="D=1-209"/>
</dbReference>
<dbReference type="PDB" id="6O9K">
    <property type="method" value="EM"/>
    <property type="resolution" value="4.00 A"/>
    <property type="chains" value="4=1-209"/>
</dbReference>
<dbReference type="PDB" id="6OFX">
    <property type="method" value="EM"/>
    <property type="resolution" value="3.30 A"/>
    <property type="chains" value="c=1-209"/>
</dbReference>
<dbReference type="PDB" id="6OG7">
    <property type="method" value="EM"/>
    <property type="resolution" value="3.30 A"/>
    <property type="chains" value="c=1-209"/>
</dbReference>
<dbReference type="PDB" id="6OGF">
    <property type="method" value="EM"/>
    <property type="resolution" value="3.90 A"/>
    <property type="chains" value="c=1-209"/>
</dbReference>
<dbReference type="PDB" id="6OGG">
    <property type="method" value="EM"/>
    <property type="resolution" value="4.20 A"/>
    <property type="chains" value="c=1-209"/>
</dbReference>
<dbReference type="PDB" id="6OGI">
    <property type="method" value="EM"/>
    <property type="resolution" value="3.40 A"/>
    <property type="chains" value="c=1-209"/>
</dbReference>
<dbReference type="PDB" id="6OM6">
    <property type="method" value="EM"/>
    <property type="resolution" value="3.10 A"/>
    <property type="chains" value="C=1-209"/>
</dbReference>
<dbReference type="PDB" id="6ORE">
    <property type="method" value="EM"/>
    <property type="resolution" value="2.90 A"/>
    <property type="chains" value="C=1-209"/>
</dbReference>
<dbReference type="PDB" id="6ORL">
    <property type="method" value="EM"/>
    <property type="resolution" value="3.50 A"/>
    <property type="chains" value="C=1-209"/>
</dbReference>
<dbReference type="PDB" id="6OSK">
    <property type="method" value="EM"/>
    <property type="resolution" value="3.60 A"/>
    <property type="chains" value="C=1-209"/>
</dbReference>
<dbReference type="PDB" id="6OSQ">
    <property type="method" value="EM"/>
    <property type="resolution" value="3.50 A"/>
    <property type="chains" value="C=1-209"/>
</dbReference>
<dbReference type="PDB" id="6OST">
    <property type="method" value="EM"/>
    <property type="resolution" value="4.20 A"/>
    <property type="chains" value="C=1-209"/>
</dbReference>
<dbReference type="PDB" id="6OT3">
    <property type="method" value="EM"/>
    <property type="resolution" value="3.90 A"/>
    <property type="chains" value="C=1-209"/>
</dbReference>
<dbReference type="PDB" id="6OUO">
    <property type="method" value="EM"/>
    <property type="resolution" value="3.70 A"/>
    <property type="chains" value="C=1-209"/>
</dbReference>
<dbReference type="PDB" id="6PC5">
    <property type="method" value="EM"/>
    <property type="resolution" value="2.70 A"/>
    <property type="chains" value="N=1-209"/>
</dbReference>
<dbReference type="PDB" id="6PC6">
    <property type="method" value="EM"/>
    <property type="resolution" value="2.50 A"/>
    <property type="chains" value="N=1-209"/>
</dbReference>
<dbReference type="PDB" id="6PC7">
    <property type="method" value="EM"/>
    <property type="resolution" value="2.50 A"/>
    <property type="chains" value="N=1-209"/>
</dbReference>
<dbReference type="PDB" id="6PC8">
    <property type="method" value="EM"/>
    <property type="resolution" value="2.90 A"/>
    <property type="chains" value="N=1-209"/>
</dbReference>
<dbReference type="PDB" id="6PCH">
    <property type="method" value="EM"/>
    <property type="resolution" value="2.90 A"/>
    <property type="chains" value="N=1-209"/>
</dbReference>
<dbReference type="PDB" id="6PCQ">
    <property type="method" value="EM"/>
    <property type="resolution" value="2.60 A"/>
    <property type="chains" value="N=1-209"/>
</dbReference>
<dbReference type="PDB" id="6PCR">
    <property type="method" value="EM"/>
    <property type="resolution" value="2.50 A"/>
    <property type="chains" value="N=1-209"/>
</dbReference>
<dbReference type="PDB" id="6PCS">
    <property type="method" value="EM"/>
    <property type="resolution" value="2.80 A"/>
    <property type="chains" value="N=1-209"/>
</dbReference>
<dbReference type="PDB" id="6PCT">
    <property type="method" value="EM"/>
    <property type="resolution" value="2.80 A"/>
    <property type="chains" value="N=1-209"/>
</dbReference>
<dbReference type="PDB" id="6PJ6">
    <property type="method" value="EM"/>
    <property type="resolution" value="2.20 A"/>
    <property type="chains" value="L=1-209"/>
</dbReference>
<dbReference type="PDB" id="6Q97">
    <property type="method" value="EM"/>
    <property type="resolution" value="3.90 A"/>
    <property type="chains" value="C=1-209"/>
</dbReference>
<dbReference type="PDB" id="6Q98">
    <property type="method" value="EM"/>
    <property type="resolution" value="4.30 A"/>
    <property type="chains" value="C=1-209"/>
</dbReference>
<dbReference type="PDB" id="6Q9A">
    <property type="method" value="EM"/>
    <property type="resolution" value="3.70 A"/>
    <property type="chains" value="C=2-208"/>
</dbReference>
<dbReference type="PDB" id="6QDW">
    <property type="method" value="EM"/>
    <property type="resolution" value="2.83 A"/>
    <property type="chains" value="d=1-209"/>
</dbReference>
<dbReference type="PDB" id="6QUL">
    <property type="method" value="EM"/>
    <property type="resolution" value="3.00 A"/>
    <property type="chains" value="D=1-209"/>
</dbReference>
<dbReference type="PDB" id="6S0K">
    <property type="method" value="EM"/>
    <property type="resolution" value="3.10 A"/>
    <property type="chains" value="D=1-209"/>
</dbReference>
<dbReference type="PDB" id="6SZS">
    <property type="method" value="EM"/>
    <property type="resolution" value="3.06 A"/>
    <property type="chains" value="D=1-209"/>
</dbReference>
<dbReference type="PDB" id="6TBV">
    <property type="method" value="EM"/>
    <property type="resolution" value="2.70 A"/>
    <property type="chains" value="L031=1-209"/>
</dbReference>
<dbReference type="PDB" id="6TC3">
    <property type="method" value="EM"/>
    <property type="resolution" value="2.70 A"/>
    <property type="chains" value="L031=1-209"/>
</dbReference>
<dbReference type="PDB" id="6U48">
    <property type="method" value="EM"/>
    <property type="resolution" value="2.87 A"/>
    <property type="chains" value="CD=1-209"/>
</dbReference>
<dbReference type="PDB" id="6VU3">
    <property type="method" value="EM"/>
    <property type="resolution" value="3.70 A"/>
    <property type="chains" value="j=1-209"/>
</dbReference>
<dbReference type="PDB" id="6VWL">
    <property type="method" value="EM"/>
    <property type="resolution" value="3.10 A"/>
    <property type="chains" value="B=1-209"/>
</dbReference>
<dbReference type="PDB" id="6VWM">
    <property type="method" value="EM"/>
    <property type="resolution" value="3.40 A"/>
    <property type="chains" value="B=1-209"/>
</dbReference>
<dbReference type="PDB" id="6VWN">
    <property type="method" value="EM"/>
    <property type="resolution" value="3.40 A"/>
    <property type="chains" value="B=1-209"/>
</dbReference>
<dbReference type="PDB" id="6VYQ">
    <property type="method" value="EM"/>
    <property type="resolution" value="3.70 A"/>
    <property type="chains" value="j=1-209"/>
</dbReference>
<dbReference type="PDB" id="6VYR">
    <property type="method" value="EM"/>
    <property type="resolution" value="3.80 A"/>
    <property type="chains" value="j=1-209"/>
</dbReference>
<dbReference type="PDB" id="6VYS">
    <property type="method" value="EM"/>
    <property type="resolution" value="3.70 A"/>
    <property type="chains" value="j=1-209"/>
</dbReference>
<dbReference type="PDB" id="6VYT">
    <property type="method" value="EM"/>
    <property type="resolution" value="14.00 A"/>
    <property type="chains" value="j=1-209"/>
</dbReference>
<dbReference type="PDB" id="6VYU">
    <property type="method" value="EM"/>
    <property type="resolution" value="7.00 A"/>
    <property type="chains" value="j=1-209"/>
</dbReference>
<dbReference type="PDB" id="6VYW">
    <property type="method" value="EM"/>
    <property type="resolution" value="7.00 A"/>
    <property type="chains" value="j=1-209"/>
</dbReference>
<dbReference type="PDB" id="6VYX">
    <property type="method" value="EM"/>
    <property type="resolution" value="9.90 A"/>
    <property type="chains" value="j=1-209"/>
</dbReference>
<dbReference type="PDB" id="6VYY">
    <property type="method" value="EM"/>
    <property type="resolution" value="9.90 A"/>
    <property type="chains" value="j=1-209"/>
</dbReference>
<dbReference type="PDB" id="6VYZ">
    <property type="method" value="EM"/>
    <property type="resolution" value="9.90 A"/>
    <property type="chains" value="j=1-209"/>
</dbReference>
<dbReference type="PDB" id="6VZ2">
    <property type="method" value="EM"/>
    <property type="resolution" value="10.00 A"/>
    <property type="chains" value="j=1-209"/>
</dbReference>
<dbReference type="PDB" id="6VZ3">
    <property type="method" value="EM"/>
    <property type="resolution" value="8.90 A"/>
    <property type="chains" value="j=1-209"/>
</dbReference>
<dbReference type="PDB" id="6VZ5">
    <property type="method" value="EM"/>
    <property type="resolution" value="8.90 A"/>
    <property type="chains" value="j=1-209"/>
</dbReference>
<dbReference type="PDB" id="6VZ7">
    <property type="method" value="EM"/>
    <property type="resolution" value="7.00 A"/>
    <property type="chains" value="j=1-209"/>
</dbReference>
<dbReference type="PDB" id="6VZJ">
    <property type="method" value="EM"/>
    <property type="resolution" value="4.10 A"/>
    <property type="chains" value="j=1-209"/>
</dbReference>
<dbReference type="PDB" id="6WD0">
    <property type="method" value="EM"/>
    <property type="resolution" value="3.00 A"/>
    <property type="chains" value="c=1-209"/>
</dbReference>
<dbReference type="PDB" id="6WD1">
    <property type="method" value="EM"/>
    <property type="resolution" value="3.30 A"/>
    <property type="chains" value="c=1-209"/>
</dbReference>
<dbReference type="PDB" id="6WD2">
    <property type="method" value="EM"/>
    <property type="resolution" value="3.60 A"/>
    <property type="chains" value="c=1-209"/>
</dbReference>
<dbReference type="PDB" id="6WD3">
    <property type="method" value="EM"/>
    <property type="resolution" value="3.60 A"/>
    <property type="chains" value="c=1-209"/>
</dbReference>
<dbReference type="PDB" id="6WD4">
    <property type="method" value="EM"/>
    <property type="resolution" value="3.70 A"/>
    <property type="chains" value="c=1-209"/>
</dbReference>
<dbReference type="PDB" id="6WD5">
    <property type="method" value="EM"/>
    <property type="resolution" value="3.60 A"/>
    <property type="chains" value="c=1-209"/>
</dbReference>
<dbReference type="PDB" id="6WD6">
    <property type="method" value="EM"/>
    <property type="resolution" value="3.70 A"/>
    <property type="chains" value="c=1-209"/>
</dbReference>
<dbReference type="PDB" id="6WD7">
    <property type="method" value="EM"/>
    <property type="resolution" value="3.90 A"/>
    <property type="chains" value="c=1-209"/>
</dbReference>
<dbReference type="PDB" id="6WD8">
    <property type="method" value="EM"/>
    <property type="resolution" value="3.70 A"/>
    <property type="chains" value="c=1-209"/>
</dbReference>
<dbReference type="PDB" id="6WD9">
    <property type="method" value="EM"/>
    <property type="resolution" value="3.70 A"/>
    <property type="chains" value="c=1-209"/>
</dbReference>
<dbReference type="PDB" id="6WDA">
    <property type="method" value="EM"/>
    <property type="resolution" value="3.80 A"/>
    <property type="chains" value="c=1-209"/>
</dbReference>
<dbReference type="PDB" id="6WDB">
    <property type="method" value="EM"/>
    <property type="resolution" value="4.00 A"/>
    <property type="chains" value="c=1-209"/>
</dbReference>
<dbReference type="PDB" id="6WDC">
    <property type="method" value="EM"/>
    <property type="resolution" value="4.20 A"/>
    <property type="chains" value="c=1-209"/>
</dbReference>
<dbReference type="PDB" id="6WDD">
    <property type="method" value="EM"/>
    <property type="resolution" value="3.20 A"/>
    <property type="chains" value="c=1-209"/>
</dbReference>
<dbReference type="PDB" id="6WDE">
    <property type="method" value="EM"/>
    <property type="resolution" value="3.00 A"/>
    <property type="chains" value="c=1-209"/>
</dbReference>
<dbReference type="PDB" id="6WDF">
    <property type="method" value="EM"/>
    <property type="resolution" value="3.30 A"/>
    <property type="chains" value="c=1-209"/>
</dbReference>
<dbReference type="PDB" id="6WDG">
    <property type="method" value="EM"/>
    <property type="resolution" value="3.30 A"/>
    <property type="chains" value="c=1-209"/>
</dbReference>
<dbReference type="PDB" id="6WDH">
    <property type="method" value="EM"/>
    <property type="resolution" value="4.30 A"/>
    <property type="chains" value="c=1-209"/>
</dbReference>
<dbReference type="PDB" id="6WDI">
    <property type="method" value="EM"/>
    <property type="resolution" value="4.00 A"/>
    <property type="chains" value="c=1-209"/>
</dbReference>
<dbReference type="PDB" id="6WDJ">
    <property type="method" value="EM"/>
    <property type="resolution" value="3.70 A"/>
    <property type="chains" value="c=1-209"/>
</dbReference>
<dbReference type="PDB" id="6WDK">
    <property type="method" value="EM"/>
    <property type="resolution" value="3.60 A"/>
    <property type="chains" value="c=1-209"/>
</dbReference>
<dbReference type="PDB" id="6WDL">
    <property type="method" value="EM"/>
    <property type="resolution" value="3.70 A"/>
    <property type="chains" value="c=1-209"/>
</dbReference>
<dbReference type="PDB" id="6WDM">
    <property type="method" value="EM"/>
    <property type="resolution" value="3.60 A"/>
    <property type="chains" value="c=1-209"/>
</dbReference>
<dbReference type="PDB" id="6WNT">
    <property type="method" value="EM"/>
    <property type="resolution" value="3.10 A"/>
    <property type="chains" value="c=1-209"/>
</dbReference>
<dbReference type="PDB" id="6WNV">
    <property type="method" value="EM"/>
    <property type="resolution" value="3.50 A"/>
    <property type="chains" value="c=1-209"/>
</dbReference>
<dbReference type="PDB" id="6WNW">
    <property type="method" value="EM"/>
    <property type="resolution" value="3.20 A"/>
    <property type="chains" value="c=1-209"/>
</dbReference>
<dbReference type="PDB" id="6WYV">
    <property type="method" value="EM"/>
    <property type="resolution" value="2.75 A"/>
    <property type="chains" value="N=1-209"/>
</dbReference>
<dbReference type="PDB" id="6X6T">
    <property type="method" value="EM"/>
    <property type="resolution" value="3.20 A"/>
    <property type="chains" value="j=1-209"/>
</dbReference>
<dbReference type="PDB" id="6X7F">
    <property type="method" value="EM"/>
    <property type="resolution" value="3.50 A"/>
    <property type="chains" value="j=1-209"/>
</dbReference>
<dbReference type="PDB" id="6X7K">
    <property type="method" value="EM"/>
    <property type="resolution" value="3.10 A"/>
    <property type="chains" value="j=1-209"/>
</dbReference>
<dbReference type="PDB" id="6X9Q">
    <property type="method" value="EM"/>
    <property type="resolution" value="4.80 A"/>
    <property type="chains" value="j=1-209"/>
</dbReference>
<dbReference type="PDB" id="6XDQ">
    <property type="method" value="EM"/>
    <property type="resolution" value="3.70 A"/>
    <property type="chains" value="j=1-209"/>
</dbReference>
<dbReference type="PDB" id="6XDR">
    <property type="method" value="EM"/>
    <property type="resolution" value="4.70 A"/>
    <property type="chains" value="j=1-209"/>
</dbReference>
<dbReference type="PDB" id="6XGF">
    <property type="method" value="EM"/>
    <property type="resolution" value="5.00 A"/>
    <property type="chains" value="j=1-209"/>
</dbReference>
<dbReference type="PDB" id="6XII">
    <property type="method" value="EM"/>
    <property type="resolution" value="7.00 A"/>
    <property type="chains" value="j=1-209"/>
</dbReference>
<dbReference type="PDB" id="6XIJ">
    <property type="method" value="EM"/>
    <property type="resolution" value="8.00 A"/>
    <property type="chains" value="j=1-209"/>
</dbReference>
<dbReference type="PDB" id="6XZ7">
    <property type="method" value="EM"/>
    <property type="resolution" value="2.10 A"/>
    <property type="chains" value="D=1-209"/>
</dbReference>
<dbReference type="PDB" id="6XZA">
    <property type="method" value="EM"/>
    <property type="resolution" value="2.66 A"/>
    <property type="chains" value="D2=1-209"/>
</dbReference>
<dbReference type="PDB" id="6XZB">
    <property type="method" value="EM"/>
    <property type="resolution" value="2.54 A"/>
    <property type="chains" value="D2=1-209"/>
</dbReference>
<dbReference type="PDB" id="6Y69">
    <property type="method" value="EM"/>
    <property type="resolution" value="2.86 A"/>
    <property type="chains" value="D=1-209"/>
</dbReference>
<dbReference type="PDB" id="6YS3">
    <property type="method" value="EM"/>
    <property type="resolution" value="2.58 A"/>
    <property type="chains" value="d=1-209"/>
</dbReference>
<dbReference type="PDB" id="6YSR">
    <property type="method" value="EM"/>
    <property type="resolution" value="3.10 A"/>
    <property type="chains" value="D=1-209"/>
</dbReference>
<dbReference type="PDB" id="6YSS">
    <property type="method" value="EM"/>
    <property type="resolution" value="2.60 A"/>
    <property type="chains" value="D=1-209"/>
</dbReference>
<dbReference type="PDB" id="6YST">
    <property type="method" value="EM"/>
    <property type="resolution" value="3.20 A"/>
    <property type="chains" value="D=1-209"/>
</dbReference>
<dbReference type="PDB" id="6YSU">
    <property type="method" value="EM"/>
    <property type="resolution" value="3.70 A"/>
    <property type="chains" value="D=1-209"/>
</dbReference>
<dbReference type="PDB" id="6ZTJ">
    <property type="method" value="EM"/>
    <property type="resolution" value="3.40 A"/>
    <property type="chains" value="BD=1-209"/>
</dbReference>
<dbReference type="PDB" id="6ZTL">
    <property type="method" value="EM"/>
    <property type="resolution" value="3.50 A"/>
    <property type="chains" value="BD=1-209"/>
</dbReference>
<dbReference type="PDB" id="6ZTM">
    <property type="method" value="EM"/>
    <property type="resolution" value="3.30 A"/>
    <property type="chains" value="BD=1-209"/>
</dbReference>
<dbReference type="PDB" id="6ZTN">
    <property type="method" value="EM"/>
    <property type="resolution" value="3.90 A"/>
    <property type="chains" value="BD=1-209"/>
</dbReference>
<dbReference type="PDB" id="6ZTO">
    <property type="method" value="EM"/>
    <property type="resolution" value="3.00 A"/>
    <property type="chains" value="BD=1-209"/>
</dbReference>
<dbReference type="PDB" id="6ZTP">
    <property type="method" value="EM"/>
    <property type="resolution" value="3.00 A"/>
    <property type="chains" value="BD=1-209"/>
</dbReference>
<dbReference type="PDB" id="6ZU1">
    <property type="method" value="EM"/>
    <property type="resolution" value="3.00 A"/>
    <property type="chains" value="BD=1-209"/>
</dbReference>
<dbReference type="PDB" id="7ABZ">
    <property type="method" value="EM"/>
    <property type="resolution" value="3.21 A"/>
    <property type="chains" value="C=1-209"/>
</dbReference>
<dbReference type="PDB" id="7AC7">
    <property type="method" value="EM"/>
    <property type="resolution" value="3.08 A"/>
    <property type="chains" value="C=1-209"/>
</dbReference>
<dbReference type="PDB" id="7ACJ">
    <property type="method" value="EM"/>
    <property type="resolution" value="3.20 A"/>
    <property type="chains" value="C=1-209"/>
</dbReference>
<dbReference type="PDB" id="7ACR">
    <property type="method" value="EM"/>
    <property type="resolution" value="3.44 A"/>
    <property type="chains" value="C=1-209"/>
</dbReference>
<dbReference type="PDB" id="7B5K">
    <property type="method" value="EM"/>
    <property type="resolution" value="2.90 A"/>
    <property type="chains" value="D=1-209"/>
</dbReference>
<dbReference type="PDB" id="7BL2">
    <property type="method" value="EM"/>
    <property type="resolution" value="3.70 A"/>
    <property type="chains" value="D=1-209"/>
</dbReference>
<dbReference type="PDB" id="7BL3">
    <property type="method" value="EM"/>
    <property type="resolution" value="3.50 A"/>
    <property type="chains" value="D=1-209"/>
</dbReference>
<dbReference type="PDB" id="7BL4">
    <property type="method" value="EM"/>
    <property type="resolution" value="2.40 A"/>
    <property type="chains" value="D=1-209"/>
</dbReference>
<dbReference type="PDB" id="7BL5">
    <property type="method" value="EM"/>
    <property type="resolution" value="3.30 A"/>
    <property type="chains" value="D=1-209"/>
</dbReference>
<dbReference type="PDB" id="7BL6">
    <property type="method" value="EM"/>
    <property type="resolution" value="4.00 A"/>
    <property type="chains" value="D=1-209"/>
</dbReference>
<dbReference type="PDB" id="7BV8">
    <property type="method" value="EM"/>
    <property type="resolution" value="3.14 A"/>
    <property type="chains" value="D=1-209"/>
</dbReference>
<dbReference type="PDB" id="7D6Z">
    <property type="method" value="EM"/>
    <property type="resolution" value="3.40 A"/>
    <property type="chains" value="D=1-209"/>
</dbReference>
<dbReference type="PDB" id="7D80">
    <property type="method" value="EM"/>
    <property type="resolution" value="4.10 A"/>
    <property type="chains" value="c=1-209"/>
</dbReference>
<dbReference type="PDB" id="7JSS">
    <property type="method" value="EM"/>
    <property type="resolution" value="3.70 A"/>
    <property type="chains" value="c=1-209"/>
</dbReference>
<dbReference type="PDB" id="7JSW">
    <property type="method" value="EM"/>
    <property type="resolution" value="3.80 A"/>
    <property type="chains" value="c=1-209"/>
</dbReference>
<dbReference type="PDB" id="7JSZ">
    <property type="method" value="EM"/>
    <property type="resolution" value="3.70 A"/>
    <property type="chains" value="c=1-209"/>
</dbReference>
<dbReference type="PDB" id="7JT1">
    <property type="method" value="EM"/>
    <property type="resolution" value="3.30 A"/>
    <property type="chains" value="c=1-209"/>
</dbReference>
<dbReference type="PDB" id="7JT2">
    <property type="method" value="EM"/>
    <property type="resolution" value="3.50 A"/>
    <property type="chains" value="c=1-209"/>
</dbReference>
<dbReference type="PDB" id="7JT3">
    <property type="method" value="EM"/>
    <property type="resolution" value="3.70 A"/>
    <property type="chains" value="c=1-209"/>
</dbReference>
<dbReference type="PDB" id="7K00">
    <property type="method" value="EM"/>
    <property type="resolution" value="1.98 A"/>
    <property type="chains" value="d=1-209"/>
</dbReference>
<dbReference type="PDB" id="7K50">
    <property type="method" value="EM"/>
    <property type="resolution" value="3.40 A"/>
    <property type="chains" value="c=1-209"/>
</dbReference>
<dbReference type="PDB" id="7K51">
    <property type="method" value="EM"/>
    <property type="resolution" value="3.50 A"/>
    <property type="chains" value="c=1-209"/>
</dbReference>
<dbReference type="PDB" id="7K52">
    <property type="method" value="EM"/>
    <property type="resolution" value="3.40 A"/>
    <property type="chains" value="c=1-209"/>
</dbReference>
<dbReference type="PDB" id="7K53">
    <property type="method" value="EM"/>
    <property type="resolution" value="3.20 A"/>
    <property type="chains" value="c=1-209"/>
</dbReference>
<dbReference type="PDB" id="7K54">
    <property type="method" value="EM"/>
    <property type="resolution" value="3.20 A"/>
    <property type="chains" value="c=1-209"/>
</dbReference>
<dbReference type="PDB" id="7K55">
    <property type="method" value="EM"/>
    <property type="resolution" value="3.30 A"/>
    <property type="chains" value="c=1-209"/>
</dbReference>
<dbReference type="PDB" id="7LV0">
    <property type="method" value="EM"/>
    <property type="resolution" value="3.20 A"/>
    <property type="chains" value="c=1-209"/>
</dbReference>
<dbReference type="PDB" id="7LVK">
    <property type="method" value="EM"/>
    <property type="resolution" value="2.20 A"/>
    <property type="chains" value="L=1-209"/>
</dbReference>
<dbReference type="PDB" id="7M5D">
    <property type="method" value="EM"/>
    <property type="resolution" value="2.80 A"/>
    <property type="chains" value="C=1-209"/>
</dbReference>
<dbReference type="PDB" id="7N1P">
    <property type="method" value="EM"/>
    <property type="resolution" value="2.33 A"/>
    <property type="chains" value="LC=1-209"/>
</dbReference>
<dbReference type="PDB" id="7N2C">
    <property type="method" value="EM"/>
    <property type="resolution" value="2.72 A"/>
    <property type="chains" value="LC=1-209"/>
</dbReference>
<dbReference type="PDB" id="7N2U">
    <property type="method" value="EM"/>
    <property type="resolution" value="2.53 A"/>
    <property type="chains" value="LC=1-209"/>
</dbReference>
<dbReference type="PDB" id="7N2V">
    <property type="method" value="EM"/>
    <property type="resolution" value="2.54 A"/>
    <property type="chains" value="LC=1-209"/>
</dbReference>
<dbReference type="PDB" id="7N30">
    <property type="method" value="EM"/>
    <property type="resolution" value="2.66 A"/>
    <property type="chains" value="LC=1-209"/>
</dbReference>
<dbReference type="PDB" id="7N31">
    <property type="method" value="EM"/>
    <property type="resolution" value="2.69 A"/>
    <property type="chains" value="LC=1-209"/>
</dbReference>
<dbReference type="PDB" id="7NBU">
    <property type="method" value="EM"/>
    <property type="resolution" value="3.11 A"/>
    <property type="chains" value="d=1-209"/>
</dbReference>
<dbReference type="PDB" id="7NSO">
    <property type="method" value="EM"/>
    <property type="resolution" value="2.90 A"/>
    <property type="chains" value="D=1-209"/>
</dbReference>
<dbReference type="PDB" id="7NSP">
    <property type="method" value="EM"/>
    <property type="resolution" value="3.50 A"/>
    <property type="chains" value="D=1-209"/>
</dbReference>
<dbReference type="PDB" id="7NSQ">
    <property type="method" value="EM"/>
    <property type="resolution" value="3.10 A"/>
    <property type="chains" value="D=1-209"/>
</dbReference>
<dbReference type="PDB" id="7NWT">
    <property type="method" value="EM"/>
    <property type="resolution" value="2.66 A"/>
    <property type="chains" value="C=1-209"/>
</dbReference>
<dbReference type="PDB" id="7NWW">
    <property type="method" value="EM"/>
    <property type="resolution" value="3.05 A"/>
    <property type="chains" value="D=1-209"/>
</dbReference>
<dbReference type="PDB" id="7O19">
    <property type="method" value="EM"/>
    <property type="resolution" value="2.90 A"/>
    <property type="chains" value="BD=1-209"/>
</dbReference>
<dbReference type="PDB" id="7O1A">
    <property type="method" value="EM"/>
    <property type="resolution" value="2.40 A"/>
    <property type="chains" value="BD=1-209"/>
</dbReference>
<dbReference type="PDB" id="7O1C">
    <property type="method" value="EM"/>
    <property type="resolution" value="2.60 A"/>
    <property type="chains" value="BD=1-209"/>
</dbReference>
<dbReference type="PDB" id="7ODE">
    <property type="method" value="EM"/>
    <property type="resolution" value="2.84 A"/>
    <property type="chains" value="L=1-209"/>
</dbReference>
<dbReference type="PDB" id="7OIF">
    <property type="method" value="EM"/>
    <property type="resolution" value="3.00 A"/>
    <property type="chains" value="D=1-209"/>
</dbReference>
<dbReference type="PDB" id="7OIG">
    <property type="method" value="EM"/>
    <property type="resolution" value="3.20 A"/>
    <property type="chains" value="D=1-209"/>
</dbReference>
<dbReference type="PDB" id="7OII">
    <property type="method" value="EM"/>
    <property type="resolution" value="3.00 A"/>
    <property type="chains" value="D=1-209"/>
</dbReference>
<dbReference type="PDB" id="7OIZ">
    <property type="method" value="EM"/>
    <property type="resolution" value="2.90 A"/>
    <property type="chains" value="d=1-209"/>
</dbReference>
<dbReference type="PDB" id="7OJ0">
    <property type="method" value="EM"/>
    <property type="resolution" value="3.50 A"/>
    <property type="chains" value="d=1-209"/>
</dbReference>
<dbReference type="PDB" id="7OT5">
    <property type="method" value="EM"/>
    <property type="resolution" value="2.90 A"/>
    <property type="chains" value="D=1-209"/>
</dbReference>
<dbReference type="PDB" id="7P3K">
    <property type="method" value="EM"/>
    <property type="resolution" value="2.90 A"/>
    <property type="chains" value="d=1-209"/>
</dbReference>
<dbReference type="PDB" id="7PJS">
    <property type="method" value="EM"/>
    <property type="resolution" value="2.35 A"/>
    <property type="chains" value="D=1-209"/>
</dbReference>
<dbReference type="PDB" id="7PJT">
    <property type="method" value="EM"/>
    <property type="resolution" value="6.00 A"/>
    <property type="chains" value="D=1-209"/>
</dbReference>
<dbReference type="PDB" id="7PJU">
    <property type="method" value="EM"/>
    <property type="resolution" value="9.50 A"/>
    <property type="chains" value="D=1-209"/>
</dbReference>
<dbReference type="PDB" id="7PJV">
    <property type="method" value="EM"/>
    <property type="resolution" value="3.10 A"/>
    <property type="chains" value="D=1-209"/>
</dbReference>
<dbReference type="PDB" id="7PJW">
    <property type="method" value="EM"/>
    <property type="resolution" value="4.00 A"/>
    <property type="chains" value="D=1-209"/>
</dbReference>
<dbReference type="PDB" id="7PJX">
    <property type="method" value="EM"/>
    <property type="resolution" value="6.50 A"/>
    <property type="chains" value="D=1-209"/>
</dbReference>
<dbReference type="PDB" id="7PJY">
    <property type="method" value="EM"/>
    <property type="resolution" value="3.10 A"/>
    <property type="chains" value="D=1-209"/>
</dbReference>
<dbReference type="PDB" id="7PJZ">
    <property type="method" value="EM"/>
    <property type="resolution" value="6.00 A"/>
    <property type="chains" value="D=1-209"/>
</dbReference>
<dbReference type="PDB" id="7Q4K">
    <property type="method" value="EM"/>
    <property type="resolution" value="3.00 A"/>
    <property type="chains" value="BD=1-209"/>
</dbReference>
<dbReference type="PDB" id="7QG8">
    <property type="method" value="EM"/>
    <property type="resolution" value="3.97 A"/>
    <property type="chains" value="Q=1-209"/>
</dbReference>
<dbReference type="PDB" id="7QGH">
    <property type="method" value="EM"/>
    <property type="resolution" value="4.48 A"/>
    <property type="chains" value="Q=1-209"/>
</dbReference>
<dbReference type="PDB" id="7QGN">
    <property type="method" value="EM"/>
    <property type="resolution" value="3.37 A"/>
    <property type="chains" value="Q=1-209"/>
</dbReference>
<dbReference type="PDB" id="7QGR">
    <property type="method" value="EM"/>
    <property type="resolution" value="5.70 A"/>
    <property type="chains" value="Q=1-209"/>
</dbReference>
<dbReference type="PDB" id="7QQ3">
    <property type="method" value="EM"/>
    <property type="resolution" value="2.10 A"/>
    <property type="chains" value="L=1-209"/>
</dbReference>
<dbReference type="PDB" id="7S1G">
    <property type="method" value="EM"/>
    <property type="resolution" value="2.48 A"/>
    <property type="chains" value="L=1-209"/>
</dbReference>
<dbReference type="PDB" id="7S1H">
    <property type="method" value="EM"/>
    <property type="resolution" value="2.35 A"/>
    <property type="chains" value="L=1-209"/>
</dbReference>
<dbReference type="PDB" id="7S1I">
    <property type="method" value="EM"/>
    <property type="resolution" value="2.48 A"/>
    <property type="chains" value="L=1-209"/>
</dbReference>
<dbReference type="PDB" id="7S1J">
    <property type="method" value="EM"/>
    <property type="resolution" value="2.47 A"/>
    <property type="chains" value="L=1-209"/>
</dbReference>
<dbReference type="PDB" id="7S1K">
    <property type="method" value="EM"/>
    <property type="resolution" value="2.42 A"/>
    <property type="chains" value="L=1-209"/>
</dbReference>
<dbReference type="PDB" id="7SA4">
    <property type="method" value="EM"/>
    <property type="resolution" value="2.55 A"/>
    <property type="chains" value="C=1-209"/>
</dbReference>
<dbReference type="PDB" id="7SS9">
    <property type="method" value="EM"/>
    <property type="resolution" value="3.90 A"/>
    <property type="chains" value="c=1-209"/>
</dbReference>
<dbReference type="PDB" id="7SSD">
    <property type="method" value="EM"/>
    <property type="resolution" value="3.30 A"/>
    <property type="chains" value="c=1-209"/>
</dbReference>
<dbReference type="PDB" id="7SSL">
    <property type="method" value="EM"/>
    <property type="resolution" value="3.80 A"/>
    <property type="chains" value="c=1-209"/>
</dbReference>
<dbReference type="PDB" id="7SSN">
    <property type="method" value="EM"/>
    <property type="resolution" value="3.20 A"/>
    <property type="chains" value="c=1-209"/>
</dbReference>
<dbReference type="PDB" id="7SSO">
    <property type="method" value="EM"/>
    <property type="resolution" value="3.20 A"/>
    <property type="chains" value="c=1-209"/>
</dbReference>
<dbReference type="PDB" id="7SSW">
    <property type="method" value="EM"/>
    <property type="resolution" value="3.80 A"/>
    <property type="chains" value="c=1-209"/>
</dbReference>
<dbReference type="PDB" id="7ST2">
    <property type="method" value="EM"/>
    <property type="resolution" value="2.90 A"/>
    <property type="chains" value="c=1-209"/>
</dbReference>
<dbReference type="PDB" id="7ST6">
    <property type="method" value="EM"/>
    <property type="resolution" value="3.00 A"/>
    <property type="chains" value="c=1-209"/>
</dbReference>
<dbReference type="PDB" id="7ST7">
    <property type="method" value="EM"/>
    <property type="resolution" value="3.20 A"/>
    <property type="chains" value="c=1-209"/>
</dbReference>
<dbReference type="PDB" id="7TOS">
    <property type="method" value="EM"/>
    <property type="resolution" value="2.90 A"/>
    <property type="chains" value="L03=1-209"/>
</dbReference>
<dbReference type="PDB" id="7UG7">
    <property type="method" value="EM"/>
    <property type="resolution" value="2.58 A"/>
    <property type="chains" value="LC=1-209"/>
</dbReference>
<dbReference type="PDB" id="7UPH">
    <property type="method" value="EM"/>
    <property type="resolution" value="4.18 A"/>
    <property type="chains" value="L=1-209"/>
</dbReference>
<dbReference type="PDB" id="7Y7C">
    <property type="method" value="EM"/>
    <property type="resolution" value="2.51 A"/>
    <property type="chains" value="d=1-209"/>
</dbReference>
<dbReference type="PDB" id="7Y7D">
    <property type="method" value="EM"/>
    <property type="resolution" value="2.58 A"/>
    <property type="chains" value="d=1-209"/>
</dbReference>
<dbReference type="PDB" id="7Y7E">
    <property type="method" value="EM"/>
    <property type="resolution" value="2.41 A"/>
    <property type="chains" value="d=1-209"/>
</dbReference>
<dbReference type="PDB" id="7Y7F">
    <property type="method" value="EM"/>
    <property type="resolution" value="2.43 A"/>
    <property type="chains" value="d=1-209"/>
</dbReference>
<dbReference type="PDB" id="7Y7G">
    <property type="method" value="EM"/>
    <property type="resolution" value="2.34 A"/>
    <property type="chains" value="d=1-209"/>
</dbReference>
<dbReference type="PDB" id="7Y7H">
    <property type="method" value="EM"/>
    <property type="resolution" value="2.51 A"/>
    <property type="chains" value="d=1-209"/>
</dbReference>
<dbReference type="PDB" id="7Z20">
    <property type="method" value="EM"/>
    <property type="resolution" value="2.29 A"/>
    <property type="chains" value="d=1-209"/>
</dbReference>
<dbReference type="PDB" id="7ZOD">
    <property type="method" value="EM"/>
    <property type="resolution" value="2.56 A"/>
    <property type="chains" value="d=1-209"/>
</dbReference>
<dbReference type="PDB" id="7ZP8">
    <property type="method" value="EM"/>
    <property type="resolution" value="2.20 A"/>
    <property type="chains" value="d=1-209"/>
</dbReference>
<dbReference type="PDB" id="7ZQ5">
    <property type="method" value="EM"/>
    <property type="resolution" value="2.70 A"/>
    <property type="chains" value="d=1-209"/>
</dbReference>
<dbReference type="PDB" id="7ZQ6">
    <property type="method" value="EM"/>
    <property type="resolution" value="2.75 A"/>
    <property type="chains" value="d=1-209"/>
</dbReference>
<dbReference type="PDB" id="7ZTA">
    <property type="method" value="EM"/>
    <property type="resolution" value="2.70 A"/>
    <property type="chains" value="L031=1-209"/>
</dbReference>
<dbReference type="PDB" id="8A3L">
    <property type="method" value="EM"/>
    <property type="resolution" value="3.42 A"/>
    <property type="chains" value="d=1-209"/>
</dbReference>
<dbReference type="PDB" id="8AKN">
    <property type="method" value="EM"/>
    <property type="resolution" value="2.30 A"/>
    <property type="chains" value="d=1-209"/>
</dbReference>
<dbReference type="PDB" id="8AM9">
    <property type="method" value="EM"/>
    <property type="resolution" value="2.80 A"/>
    <property type="chains" value="d=1-209"/>
</dbReference>
<dbReference type="PDB" id="8ANA">
    <property type="method" value="EM"/>
    <property type="resolution" value="2.10 A"/>
    <property type="chains" value="d=1-209"/>
</dbReference>
<dbReference type="PDB" id="8AP4">
    <property type="method" value="EM"/>
    <property type="resolution" value="3.00 A"/>
    <property type="chains" value="d=1-209"/>
</dbReference>
<dbReference type="PDB" id="8AYE">
    <property type="method" value="EM"/>
    <property type="resolution" value="1.96 A"/>
    <property type="chains" value="d=1-209"/>
</dbReference>
<dbReference type="PDB" id="8B0X">
    <property type="method" value="EM"/>
    <property type="resolution" value="1.55 A"/>
    <property type="chains" value="d=1-209"/>
</dbReference>
<dbReference type="PDB" id="8B7Y">
    <property type="method" value="EM"/>
    <property type="resolution" value="3.00 A"/>
    <property type="chains" value="L=1-209"/>
</dbReference>
<dbReference type="PDB" id="8BF7">
    <property type="method" value="EM"/>
    <property type="resolution" value="2.33 A"/>
    <property type="chains" value="B=1-209"/>
</dbReference>
<dbReference type="PDB" id="8BGE">
    <property type="method" value="EM"/>
    <property type="resolution" value="2.11 A"/>
    <property type="chains" value="B=1-209"/>
</dbReference>
<dbReference type="PDB" id="8BGH">
    <property type="method" value="EM"/>
    <property type="resolution" value="2.88 A"/>
    <property type="chains" value="B=1-209"/>
</dbReference>
<dbReference type="PDB" id="8BH4">
    <property type="method" value="EM"/>
    <property type="resolution" value="2.62 A"/>
    <property type="chains" value="B=1-209"/>
</dbReference>
<dbReference type="PDB" id="8BHJ">
    <property type="method" value="EM"/>
    <property type="resolution" value="2.81 A"/>
    <property type="chains" value="B=1-209"/>
</dbReference>
<dbReference type="PDB" id="8BHL">
    <property type="method" value="EM"/>
    <property type="resolution" value="2.21 A"/>
    <property type="chains" value="B=1-209"/>
</dbReference>
<dbReference type="PDB" id="8BHN">
    <property type="method" value="EM"/>
    <property type="resolution" value="2.85 A"/>
    <property type="chains" value="B=1-209"/>
</dbReference>
<dbReference type="PDB" id="8BHP">
    <property type="method" value="EM"/>
    <property type="resolution" value="2.37 A"/>
    <property type="chains" value="B=1-209"/>
</dbReference>
<dbReference type="PDB" id="8BIL">
    <property type="method" value="EM"/>
    <property type="resolution" value="2.04 A"/>
    <property type="chains" value="B=1-209"/>
</dbReference>
<dbReference type="PDB" id="8BIM">
    <property type="method" value="EM"/>
    <property type="resolution" value="2.04 A"/>
    <property type="chains" value="B=1-209"/>
</dbReference>
<dbReference type="PDB" id="8C8X">
    <property type="method" value="EM"/>
    <property type="resolution" value="3.93 A"/>
    <property type="chains" value="D=1-209"/>
</dbReference>
<dbReference type="PDB" id="8C8Y">
    <property type="method" value="EM"/>
    <property type="resolution" value="3.03 A"/>
    <property type="chains" value="D=1-209"/>
</dbReference>
<dbReference type="PDB" id="8C8Z">
    <property type="method" value="EM"/>
    <property type="resolution" value="3.12 A"/>
    <property type="chains" value="D=1-209"/>
</dbReference>
<dbReference type="PDB" id="8C90">
    <property type="method" value="EM"/>
    <property type="resolution" value="3.15 A"/>
    <property type="chains" value="D=1-209"/>
</dbReference>
<dbReference type="PDB" id="8C91">
    <property type="method" value="EM"/>
    <property type="resolution" value="4.19 A"/>
    <property type="chains" value="D=1-209"/>
</dbReference>
<dbReference type="PDB" id="8C92">
    <property type="method" value="EM"/>
    <property type="resolution" value="3.79 A"/>
    <property type="chains" value="D=1-209"/>
</dbReference>
<dbReference type="PDB" id="8C93">
    <property type="method" value="EM"/>
    <property type="resolution" value="4.17 A"/>
    <property type="chains" value="D=1-209"/>
</dbReference>
<dbReference type="PDB" id="8C94">
    <property type="method" value="EM"/>
    <property type="resolution" value="3.80 A"/>
    <property type="chains" value="D=1-209"/>
</dbReference>
<dbReference type="PDB" id="8C96">
    <property type="method" value="EM"/>
    <property type="resolution" value="4.43 A"/>
    <property type="chains" value="D=1-209"/>
</dbReference>
<dbReference type="PDB" id="8C97">
    <property type="method" value="EM"/>
    <property type="resolution" value="4.07 A"/>
    <property type="chains" value="D=1-209"/>
</dbReference>
<dbReference type="PDB" id="8CAM">
    <property type="method" value="EM"/>
    <property type="resolution" value="1.86 A"/>
    <property type="chains" value="d=1-209"/>
</dbReference>
<dbReference type="PDB" id="8CEU">
    <property type="method" value="EM"/>
    <property type="resolution" value="1.83 A"/>
    <property type="chains" value="d=1-209"/>
</dbReference>
<dbReference type="PDB" id="8CGD">
    <property type="method" value="EM"/>
    <property type="resolution" value="1.98 A"/>
    <property type="chains" value="d=1-209"/>
</dbReference>
<dbReference type="PDB" id="8CGK">
    <property type="method" value="EM"/>
    <property type="resolution" value="1.64 A"/>
    <property type="chains" value="d=1-209"/>
</dbReference>
<dbReference type="PDB" id="8CGV">
    <property type="method" value="EM"/>
    <property type="resolution" value="1.66 A"/>
    <property type="chains" value="d=1-209"/>
</dbReference>
<dbReference type="PDB" id="8E30">
    <property type="method" value="EM"/>
    <property type="resolution" value="1.91 A"/>
    <property type="chains" value="N=1-209"/>
</dbReference>
<dbReference type="PDB" id="8E32">
    <property type="method" value="EM"/>
    <property type="resolution" value="2.35 A"/>
    <property type="chains" value="N=1-209"/>
</dbReference>
<dbReference type="PDB" id="8E33">
    <property type="method" value="EM"/>
    <property type="resolution" value="2.23 A"/>
    <property type="chains" value="N=1-209"/>
</dbReference>
<dbReference type="PDB" id="8E35">
    <property type="method" value="EM"/>
    <property type="resolution" value="2.27 A"/>
    <property type="chains" value="N=1-209"/>
</dbReference>
<dbReference type="PDB" id="8E36">
    <property type="method" value="EM"/>
    <property type="resolution" value="2.38 A"/>
    <property type="chains" value="N=1-209"/>
</dbReference>
<dbReference type="PDB" id="8E3L">
    <property type="method" value="EM"/>
    <property type="resolution" value="2.35 A"/>
    <property type="chains" value="N=1-209"/>
</dbReference>
<dbReference type="PDB" id="8E3M">
    <property type="method" value="EM"/>
    <property type="resolution" value="2.25 A"/>
    <property type="chains" value="N=1-209"/>
</dbReference>
<dbReference type="PDB" id="8E3O">
    <property type="method" value="EM"/>
    <property type="resolution" value="1.99 A"/>
    <property type="chains" value="N=1-209"/>
</dbReference>
<dbReference type="PDB" id="8E41">
    <property type="method" value="EM"/>
    <property type="resolution" value="2.13 A"/>
    <property type="chains" value="N=1-209"/>
</dbReference>
<dbReference type="PDB" id="8E42">
    <property type="method" value="EM"/>
    <property type="resolution" value="2.29 A"/>
    <property type="chains" value="N=1-209"/>
</dbReference>
<dbReference type="PDB" id="8E43">
    <property type="method" value="EM"/>
    <property type="resolution" value="2.09 A"/>
    <property type="chains" value="N=1-209"/>
</dbReference>
<dbReference type="PDB" id="8E44">
    <property type="method" value="EM"/>
    <property type="resolution" value="2.53 A"/>
    <property type="chains" value="N=1-209"/>
</dbReference>
<dbReference type="PDB" id="8E45">
    <property type="method" value="EM"/>
    <property type="resolution" value="2.30 A"/>
    <property type="chains" value="N=1-209"/>
</dbReference>
<dbReference type="PDB" id="8E46">
    <property type="method" value="EM"/>
    <property type="resolution" value="2.32 A"/>
    <property type="chains" value="N=1-209"/>
</dbReference>
<dbReference type="PDB" id="8E47">
    <property type="method" value="EM"/>
    <property type="resolution" value="2.32 A"/>
    <property type="chains" value="N=1-209"/>
</dbReference>
<dbReference type="PDB" id="8E48">
    <property type="method" value="EM"/>
    <property type="resolution" value="2.27 A"/>
    <property type="chains" value="N=1-209"/>
</dbReference>
<dbReference type="PDB" id="8E49">
    <property type="method" value="EM"/>
    <property type="resolution" value="2.05 A"/>
    <property type="chains" value="N=1-209"/>
</dbReference>
<dbReference type="PDB" id="8EIU">
    <property type="method" value="EM"/>
    <property type="resolution" value="2.24 A"/>
    <property type="chains" value="d=1-209"/>
</dbReference>
<dbReference type="PDB" id="8EKC">
    <property type="method" value="EM"/>
    <property type="resolution" value="2.70 A"/>
    <property type="chains" value="D=1-209"/>
</dbReference>
<dbReference type="PDB" id="8EMM">
    <property type="method" value="EM"/>
    <property type="resolution" value="2.10 A"/>
    <property type="chains" value="d=1-209"/>
</dbReference>
<dbReference type="PDB" id="8FIZ">
    <property type="method" value="EM"/>
    <property type="resolution" value="3.80 A"/>
    <property type="chains" value="BE=1-209"/>
</dbReference>
<dbReference type="PDB" id="8FTO">
    <property type="method" value="EM"/>
    <property type="resolution" value="1.85 A"/>
    <property type="chains" value="d=1-209"/>
</dbReference>
<dbReference type="PDB" id="8FZD">
    <property type="method" value="EM"/>
    <property type="resolution" value="3.10 A"/>
    <property type="chains" value="D=1-209"/>
</dbReference>
<dbReference type="PDB" id="8FZE">
    <property type="method" value="EM"/>
    <property type="resolution" value="3.00 A"/>
    <property type="chains" value="D=1-209"/>
</dbReference>
<dbReference type="PDB" id="8FZF">
    <property type="method" value="EM"/>
    <property type="resolution" value="3.20 A"/>
    <property type="chains" value="D=1-209"/>
</dbReference>
<dbReference type="PDB" id="8FZG">
    <property type="method" value="EM"/>
    <property type="resolution" value="3.10 A"/>
    <property type="chains" value="D=1-209"/>
</dbReference>
<dbReference type="PDB" id="8FZH">
    <property type="method" value="EM"/>
    <property type="resolution" value="2.90 A"/>
    <property type="chains" value="D=1-209"/>
</dbReference>
<dbReference type="PDB" id="8FZI">
    <property type="method" value="EM"/>
    <property type="resolution" value="3.10 A"/>
    <property type="chains" value="D=1-209"/>
</dbReference>
<dbReference type="PDB" id="8FZJ">
    <property type="method" value="EM"/>
    <property type="resolution" value="3.00 A"/>
    <property type="chains" value="D=1-209"/>
</dbReference>
<dbReference type="PDB" id="8G2U">
    <property type="method" value="EM"/>
    <property type="resolution" value="3.00 A"/>
    <property type="chains" value="D=1-209"/>
</dbReference>
<dbReference type="PDB" id="8G31">
    <property type="method" value="EM"/>
    <property type="resolution" value="3.20 A"/>
    <property type="chains" value="D=1-209"/>
</dbReference>
<dbReference type="PDB" id="8G34">
    <property type="method" value="EM"/>
    <property type="resolution" value="3.20 A"/>
    <property type="chains" value="D=1-209"/>
</dbReference>
<dbReference type="PDB" id="8G38">
    <property type="method" value="EM"/>
    <property type="resolution" value="3.20 A"/>
    <property type="chains" value="D=1-209"/>
</dbReference>
<dbReference type="PDB" id="8G6W">
    <property type="method" value="EM"/>
    <property type="resolution" value="2.02 A"/>
    <property type="chains" value="d=1-209"/>
</dbReference>
<dbReference type="PDB" id="8G6X">
    <property type="method" value="EM"/>
    <property type="resolution" value="2.31 A"/>
    <property type="chains" value="d=1-209"/>
</dbReference>
<dbReference type="PDB" id="8G6Y">
    <property type="method" value="EM"/>
    <property type="resolution" value="2.09 A"/>
    <property type="chains" value="d=1-209"/>
</dbReference>
<dbReference type="PDB" id="8G7P">
    <property type="method" value="EM"/>
    <property type="resolution" value="2.90 A"/>
    <property type="chains" value="D=1-209"/>
</dbReference>
<dbReference type="PDB" id="8G7Q">
    <property type="method" value="EM"/>
    <property type="resolution" value="3.10 A"/>
    <property type="chains" value="D=1-209"/>
</dbReference>
<dbReference type="PDB" id="8G7R">
    <property type="method" value="EM"/>
    <property type="resolution" value="2.80 A"/>
    <property type="chains" value="D=1-209"/>
</dbReference>
<dbReference type="PDB" id="8G7S">
    <property type="method" value="EM"/>
    <property type="resolution" value="3.10 A"/>
    <property type="chains" value="D=1-209"/>
</dbReference>
<dbReference type="PDB" id="8HSP">
    <property type="method" value="EM"/>
    <property type="resolution" value="2.32 A"/>
    <property type="chains" value="d=1-209"/>
</dbReference>
<dbReference type="PDB" id="8HTZ">
    <property type="method" value="EM"/>
    <property type="resolution" value="2.40 A"/>
    <property type="chains" value="d=1-209"/>
</dbReference>
<dbReference type="PDB" id="8HU1">
    <property type="method" value="EM"/>
    <property type="resolution" value="2.69 A"/>
    <property type="chains" value="d=1-209"/>
</dbReference>
<dbReference type="PDB" id="8IFB">
    <property type="method" value="EM"/>
    <property type="resolution" value="2.43 A"/>
    <property type="chains" value="d=1-209"/>
</dbReference>
<dbReference type="PDB" id="8IFC">
    <property type="method" value="EM"/>
    <property type="resolution" value="2.90 A"/>
    <property type="chains" value="d=1-209"/>
</dbReference>
<dbReference type="PDB" id="8J1Z">
    <property type="method" value="EM"/>
    <property type="resolution" value="2.60 A"/>
    <property type="chains" value="d=1-209"/>
</dbReference>
<dbReference type="PDB" id="8P16">
    <property type="method" value="EM"/>
    <property type="resolution" value="2.77 A"/>
    <property type="chains" value="C=1-209"/>
</dbReference>
<dbReference type="PDB" id="8P17">
    <property type="method" value="EM"/>
    <property type="resolution" value="2.78 A"/>
    <property type="chains" value="C=1-209"/>
</dbReference>
<dbReference type="PDB" id="8P18">
    <property type="method" value="EM"/>
    <property type="resolution" value="2.77 A"/>
    <property type="chains" value="C=1-209"/>
</dbReference>
<dbReference type="PDB" id="8PEG">
    <property type="method" value="EM"/>
    <property type="resolution" value="3.30 A"/>
    <property type="chains" value="c=1-209"/>
</dbReference>
<dbReference type="PDB" id="8PHJ">
    <property type="method" value="EM"/>
    <property type="resolution" value="3.67 A"/>
    <property type="chains" value="d=1-209"/>
</dbReference>
<dbReference type="PDB" id="8PKL">
    <property type="method" value="EM"/>
    <property type="resolution" value="3.09 A"/>
    <property type="chains" value="c=1-209"/>
</dbReference>
<dbReference type="PDB" id="8PVA">
    <property type="method" value="EM"/>
    <property type="resolution" value="4.50 A"/>
    <property type="chains" value="d=1-209"/>
</dbReference>
<dbReference type="PDB" id="8Q4F">
    <property type="method" value="EM"/>
    <property type="resolution" value="3.10 A"/>
    <property type="chains" value="d=1-209"/>
</dbReference>
<dbReference type="PDB" id="8QBT">
    <property type="method" value="EM"/>
    <property type="resolution" value="2.20 A"/>
    <property type="chains" value="D=1-209"/>
</dbReference>
<dbReference type="PDB" id="8QK7">
    <property type="method" value="EM"/>
    <property type="resolution" value="2.77 A"/>
    <property type="chains" value="C=1-209"/>
</dbReference>
<dbReference type="PDB" id="8QOA">
    <property type="method" value="EM"/>
    <property type="resolution" value="2.00 A"/>
    <property type="chains" value="d=1-209"/>
</dbReference>
<dbReference type="PDB" id="8R6C">
    <property type="method" value="EM"/>
    <property type="resolution" value="2.20 A"/>
    <property type="chains" value="d=1-209"/>
</dbReference>
<dbReference type="PDB" id="8R8M">
    <property type="method" value="EM"/>
    <property type="resolution" value="2.40 A"/>
    <property type="chains" value="d=1-209"/>
</dbReference>
<dbReference type="PDB" id="8RPY">
    <property type="method" value="EM"/>
    <property type="resolution" value="2.64 A"/>
    <property type="chains" value="D=1-209"/>
</dbReference>
<dbReference type="PDB" id="8RPZ">
    <property type="method" value="EM"/>
    <property type="resolution" value="2.44 A"/>
    <property type="chains" value="D=1-209"/>
</dbReference>
<dbReference type="PDB" id="8RQ0">
    <property type="method" value="EM"/>
    <property type="resolution" value="2.44 A"/>
    <property type="chains" value="D=1-209"/>
</dbReference>
<dbReference type="PDB" id="8RQ2">
    <property type="method" value="EM"/>
    <property type="resolution" value="2.44 A"/>
    <property type="chains" value="D=1-209"/>
</dbReference>
<dbReference type="PDB" id="8SYL">
    <property type="method" value="EM"/>
    <property type="resolution" value="2.90 A"/>
    <property type="chains" value="D=1-209"/>
</dbReference>
<dbReference type="PDB" id="8T5D">
    <property type="method" value="EM"/>
    <property type="resolution" value="3.20 A"/>
    <property type="chains" value="D=1-209"/>
</dbReference>
<dbReference type="PDB" id="8T5H">
    <property type="method" value="EM"/>
    <property type="resolution" value="3.30 A"/>
    <property type="chains" value="D=1-209"/>
</dbReference>
<dbReference type="PDB" id="8UPO">
    <property type="method" value="EM"/>
    <property type="resolution" value="5.50 A"/>
    <property type="chains" value="j=1-209"/>
</dbReference>
<dbReference type="PDB" id="8UPR">
    <property type="method" value="EM"/>
    <property type="resolution" value="5.30 A"/>
    <property type="chains" value="j=1-209"/>
</dbReference>
<dbReference type="PDB" id="8UQL">
    <property type="method" value="EM"/>
    <property type="resolution" value="3.20 A"/>
    <property type="chains" value="j=1-209"/>
</dbReference>
<dbReference type="PDB" id="8UQM">
    <property type="method" value="EM"/>
    <property type="resolution" value="5.30 A"/>
    <property type="chains" value="j=1-209"/>
</dbReference>
<dbReference type="PDB" id="8UQP">
    <property type="method" value="EM"/>
    <property type="resolution" value="3.80 A"/>
    <property type="chains" value="j=1-209"/>
</dbReference>
<dbReference type="PDB" id="8UR0">
    <property type="method" value="EM"/>
    <property type="resolution" value="3.40 A"/>
    <property type="chains" value="j=1-209"/>
</dbReference>
<dbReference type="PDB" id="8URH">
    <property type="method" value="EM"/>
    <property type="resolution" value="5.70 A"/>
    <property type="chains" value="j=1-209"/>
</dbReference>
<dbReference type="PDB" id="8URI">
    <property type="method" value="EM"/>
    <property type="resolution" value="5.30 A"/>
    <property type="chains" value="j=1-209"/>
</dbReference>
<dbReference type="PDB" id="8URX">
    <property type="method" value="EM"/>
    <property type="resolution" value="6.60 A"/>
    <property type="chains" value="j=1-209"/>
</dbReference>
<dbReference type="PDB" id="8URY">
    <property type="method" value="EM"/>
    <property type="resolution" value="3.10 A"/>
    <property type="chains" value="j=1-209"/>
</dbReference>
<dbReference type="PDB" id="8VS9">
    <property type="method" value="EM"/>
    <property type="resolution" value="3.90 A"/>
    <property type="chains" value="L03=1-209"/>
</dbReference>
<dbReference type="PDB" id="8VSA">
    <property type="method" value="EM"/>
    <property type="resolution" value="3.70 A"/>
    <property type="chains" value="L03=1-209"/>
</dbReference>
<dbReference type="PDB" id="8W51">
    <property type="method" value="EM"/>
    <property type="resolution" value="2.40 A"/>
    <property type="chains" value="D=1-209"/>
</dbReference>
<dbReference type="PDB" id="8YUO">
    <property type="method" value="EM"/>
    <property type="resolution" value="2.25 A"/>
    <property type="chains" value="d=1-209"/>
</dbReference>
<dbReference type="PDB" id="8YUP">
    <property type="method" value="EM"/>
    <property type="resolution" value="2.39 A"/>
    <property type="chains" value="d=1-209"/>
</dbReference>
<dbReference type="PDB" id="8YUQ">
    <property type="method" value="EM"/>
    <property type="resolution" value="2.41 A"/>
    <property type="chains" value="d=1-209"/>
</dbReference>
<dbReference type="PDB" id="8YUR">
    <property type="method" value="EM"/>
    <property type="resolution" value="2.47 A"/>
    <property type="chains" value="d=1-209"/>
</dbReference>
<dbReference type="PDB" id="8YUS">
    <property type="method" value="EM"/>
    <property type="resolution" value="2.43 A"/>
    <property type="chains" value="d=1-209"/>
</dbReference>
<dbReference type="PDB" id="9AX8">
    <property type="method" value="EM"/>
    <property type="resolution" value="2.60 A"/>
    <property type="chains" value="4=1-209"/>
</dbReference>
<dbReference type="PDB" id="9CL9">
    <property type="method" value="EM"/>
    <property type="resolution" value="5.04 A"/>
    <property type="chains" value="D=1-209"/>
</dbReference>
<dbReference type="PDB" id="9D89">
    <property type="method" value="EM"/>
    <property type="resolution" value="1.95 A"/>
    <property type="chains" value="G=1-209"/>
</dbReference>
<dbReference type="PDB" id="9DYG">
    <property type="method" value="EM"/>
    <property type="resolution" value="5.27 A"/>
    <property type="chains" value="D=6-209"/>
</dbReference>
<dbReference type="PDB" id="9FBV">
    <property type="method" value="EM"/>
    <property type="resolution" value="2.40 A"/>
    <property type="chains" value="d=1-209"/>
</dbReference>
<dbReference type="PDB" id="9GFT">
    <property type="method" value="EM"/>
    <property type="resolution" value="3.10 A"/>
    <property type="chains" value="AY/Q=1-209"/>
</dbReference>
<dbReference type="PDB" id="9GGR">
    <property type="method" value="EM"/>
    <property type="resolution" value="3.20 A"/>
    <property type="chains" value="AY/Q=1-209"/>
</dbReference>
<dbReference type="PDB" id="9H3K">
    <property type="method" value="EM"/>
    <property type="resolution" value="6.62 A"/>
    <property type="chains" value="D=1-209"/>
</dbReference>
<dbReference type="PDB" id="9H3L">
    <property type="method" value="EM"/>
    <property type="resolution" value="5.84 A"/>
    <property type="chains" value="D=1-209"/>
</dbReference>
<dbReference type="PDB" id="9H3M">
    <property type="method" value="EM"/>
    <property type="resolution" value="4.41 A"/>
    <property type="chains" value="D=1-209"/>
</dbReference>
<dbReference type="PDB" id="9H3N">
    <property type="method" value="EM"/>
    <property type="resolution" value="3.69 A"/>
    <property type="chains" value="D=1-209"/>
</dbReference>
<dbReference type="PDB" id="9H3O">
    <property type="method" value="EM"/>
    <property type="resolution" value="4.54 A"/>
    <property type="chains" value="D=1-209"/>
</dbReference>
<dbReference type="PDB" id="9H3P">
    <property type="method" value="EM"/>
    <property type="resolution" value="7.06 A"/>
    <property type="chains" value="D=1-209"/>
</dbReference>
<dbReference type="PDB" id="9H3Q">
    <property type="method" value="EM"/>
    <property type="resolution" value="4.02 A"/>
    <property type="chains" value="D=1-209"/>
</dbReference>
<dbReference type="PDB" id="9H3R">
    <property type="method" value="EM"/>
    <property type="resolution" value="4.12 A"/>
    <property type="chains" value="D=1-209"/>
</dbReference>
<dbReference type="PDB" id="9H3S">
    <property type="method" value="EM"/>
    <property type="resolution" value="4.16 A"/>
    <property type="chains" value="D=1-209"/>
</dbReference>
<dbReference type="PDB" id="9H3T">
    <property type="method" value="EM"/>
    <property type="resolution" value="3.85 A"/>
    <property type="chains" value="D=1-209"/>
</dbReference>
<dbReference type="PDB" id="9H3U">
    <property type="method" value="EM"/>
    <property type="resolution" value="3.47 A"/>
    <property type="chains" value="D=1-209"/>
</dbReference>
<dbReference type="PDB" id="9H3V">
    <property type="method" value="EM"/>
    <property type="resolution" value="3.55 A"/>
    <property type="chains" value="D=1-209"/>
</dbReference>
<dbReference type="PDB" id="9H3W">
    <property type="method" value="EM"/>
    <property type="resolution" value="5.38 A"/>
    <property type="chains" value="D=1-209"/>
</dbReference>
<dbReference type="PDB" id="9H3X">
    <property type="method" value="EM"/>
    <property type="resolution" value="4.12 A"/>
    <property type="chains" value="D=1-209"/>
</dbReference>
<dbReference type="PDB" id="9H3Y">
    <property type="method" value="EM"/>
    <property type="resolution" value="3.09 A"/>
    <property type="chains" value="D=1-209"/>
</dbReference>
<dbReference type="PDB" id="9H3Z">
    <property type="method" value="EM"/>
    <property type="resolution" value="2.98 A"/>
    <property type="chains" value="D=1-209"/>
</dbReference>
<dbReference type="PDB" id="9HA1">
    <property type="method" value="EM"/>
    <property type="resolution" value="4.17 A"/>
    <property type="chains" value="D=1-209"/>
</dbReference>
<dbReference type="PDB" id="9HA2">
    <property type="method" value="EM"/>
    <property type="resolution" value="4.17 A"/>
    <property type="chains" value="D=1-209"/>
</dbReference>
<dbReference type="PDB" id="9HA3">
    <property type="method" value="EM"/>
    <property type="resolution" value="3.62 A"/>
    <property type="chains" value="D=1-209"/>
</dbReference>
<dbReference type="PDB" id="9HA4">
    <property type="method" value="EM"/>
    <property type="resolution" value="4.26 A"/>
    <property type="chains" value="D=1-209"/>
</dbReference>
<dbReference type="PDB" id="9HA5">
    <property type="method" value="EM"/>
    <property type="resolution" value="3.30 A"/>
    <property type="chains" value="D=1-209"/>
</dbReference>
<dbReference type="PDB" id="9HA6">
    <property type="method" value="EM"/>
    <property type="resolution" value="3.08 A"/>
    <property type="chains" value="D=1-209"/>
</dbReference>
<dbReference type="PDB" id="9HA7">
    <property type="method" value="EM"/>
    <property type="resolution" value="4.37 A"/>
    <property type="chains" value="D=1-209"/>
</dbReference>
<dbReference type="PDB" id="9HAI">
    <property type="method" value="EM"/>
    <property type="resolution" value="3.01 A"/>
    <property type="chains" value="D=1-209"/>
</dbReference>
<dbReference type="PDB" id="9HAL">
    <property type="method" value="EM"/>
    <property type="resolution" value="4.49 A"/>
    <property type="chains" value="D=1-209"/>
</dbReference>
<dbReference type="PDB" id="9HAM">
    <property type="method" value="EM"/>
    <property type="resolution" value="5.06 A"/>
    <property type="chains" value="D=1-209"/>
</dbReference>
<dbReference type="PDB" id="9MOR">
    <property type="method" value="EM"/>
    <property type="resolution" value="2.65 A"/>
    <property type="chains" value="C=1-209"/>
</dbReference>
<dbReference type="PDB" id="9MQ4">
    <property type="method" value="EM"/>
    <property type="resolution" value="2.78 A"/>
    <property type="chains" value="C=1-209"/>
</dbReference>
<dbReference type="PDBsum" id="1ML5"/>
<dbReference type="PDBsum" id="2J28"/>
<dbReference type="PDBsum" id="2RDO"/>
<dbReference type="PDBsum" id="3BBX"/>
<dbReference type="PDBsum" id="3IY9"/>
<dbReference type="PDBsum" id="3J5L"/>
<dbReference type="PDBsum" id="3J7Z"/>
<dbReference type="PDBsum" id="3J8G"/>
<dbReference type="PDBsum" id="3J9Y"/>
<dbReference type="PDBsum" id="3J9Z"/>
<dbReference type="PDBsum" id="3JA1"/>
<dbReference type="PDBsum" id="3JBU"/>
<dbReference type="PDBsum" id="3JBV"/>
<dbReference type="PDBsum" id="3JCD"/>
<dbReference type="PDBsum" id="3JCE"/>
<dbReference type="PDBsum" id="3JCJ"/>
<dbReference type="PDBsum" id="3JCN"/>
<dbReference type="PDBsum" id="4CSU"/>
<dbReference type="PDBsum" id="4U1U"/>
<dbReference type="PDBsum" id="4U1V"/>
<dbReference type="PDBsum" id="4U20"/>
<dbReference type="PDBsum" id="4U24"/>
<dbReference type="PDBsum" id="4U25"/>
<dbReference type="PDBsum" id="4U26"/>
<dbReference type="PDBsum" id="4U27"/>
<dbReference type="PDBsum" id="4UY8"/>
<dbReference type="PDBsum" id="4V47"/>
<dbReference type="PDBsum" id="4V48"/>
<dbReference type="PDBsum" id="4V4H"/>
<dbReference type="PDBsum" id="4V4Q"/>
<dbReference type="PDBsum" id="4V4V"/>
<dbReference type="PDBsum" id="4V4W"/>
<dbReference type="PDBsum" id="4V50"/>
<dbReference type="PDBsum" id="4V52"/>
<dbReference type="PDBsum" id="4V53"/>
<dbReference type="PDBsum" id="4V54"/>
<dbReference type="PDBsum" id="4V55"/>
<dbReference type="PDBsum" id="4V56"/>
<dbReference type="PDBsum" id="4V57"/>
<dbReference type="PDBsum" id="4V5B"/>
<dbReference type="PDBsum" id="4V5H"/>
<dbReference type="PDBsum" id="4V5Y"/>
<dbReference type="PDBsum" id="4V64"/>
<dbReference type="PDBsum" id="4V65"/>
<dbReference type="PDBsum" id="4V66"/>
<dbReference type="PDBsum" id="4V69"/>
<dbReference type="PDBsum" id="4V6C"/>
<dbReference type="PDBsum" id="4V6D"/>
<dbReference type="PDBsum" id="4V6E"/>
<dbReference type="PDBsum" id="4V6K"/>
<dbReference type="PDBsum" id="4V6L"/>
<dbReference type="PDBsum" id="4V6M"/>
<dbReference type="PDBsum" id="4V6N"/>
<dbReference type="PDBsum" id="4V6O"/>
<dbReference type="PDBsum" id="4V6P"/>
<dbReference type="PDBsum" id="4V6Q"/>
<dbReference type="PDBsum" id="4V6R"/>
<dbReference type="PDBsum" id="4V6S"/>
<dbReference type="PDBsum" id="4V6T"/>
<dbReference type="PDBsum" id="4V6V"/>
<dbReference type="PDBsum" id="4V6Y"/>
<dbReference type="PDBsum" id="4V6Z"/>
<dbReference type="PDBsum" id="4V70"/>
<dbReference type="PDBsum" id="4V71"/>
<dbReference type="PDBsum" id="4V72"/>
<dbReference type="PDBsum" id="4V73"/>
<dbReference type="PDBsum" id="4V74"/>
<dbReference type="PDBsum" id="4V75"/>
<dbReference type="PDBsum" id="4V76"/>
<dbReference type="PDBsum" id="4V77"/>
<dbReference type="PDBsum" id="4V78"/>
<dbReference type="PDBsum" id="4V79"/>
<dbReference type="PDBsum" id="4V7A"/>
<dbReference type="PDBsum" id="4V7B"/>
<dbReference type="PDBsum" id="4V7C"/>
<dbReference type="PDBsum" id="4V7D"/>
<dbReference type="PDBsum" id="4V7I"/>
<dbReference type="PDBsum" id="4V7S"/>
<dbReference type="PDBsum" id="4V7T"/>
<dbReference type="PDBsum" id="4V7U"/>
<dbReference type="PDBsum" id="4V7V"/>
<dbReference type="PDBsum" id="4V85"/>
<dbReference type="PDBsum" id="4V89"/>
<dbReference type="PDBsum" id="4V9C"/>
<dbReference type="PDBsum" id="4V9D"/>
<dbReference type="PDBsum" id="4V9O"/>
<dbReference type="PDBsum" id="4V9P"/>
<dbReference type="PDBsum" id="4WF1"/>
<dbReference type="PDBsum" id="4WOI"/>
<dbReference type="PDBsum" id="4WWW"/>
<dbReference type="PDBsum" id="4YBB"/>
<dbReference type="PDBsum" id="5ADY"/>
<dbReference type="PDBsum" id="5AFI"/>
<dbReference type="PDBsum" id="5AKA"/>
<dbReference type="PDBsum" id="5GAD"/>
<dbReference type="PDBsum" id="5GAE"/>
<dbReference type="PDBsum" id="5GAF"/>
<dbReference type="PDBsum" id="5GAG"/>
<dbReference type="PDBsum" id="5GAH"/>
<dbReference type="PDBsum" id="5H5U"/>
<dbReference type="PDBsum" id="5IQR"/>
<dbReference type="PDBsum" id="5IT8"/>
<dbReference type="PDBsum" id="5J5B"/>
<dbReference type="PDBsum" id="5J7L"/>
<dbReference type="PDBsum" id="5J88"/>
<dbReference type="PDBsum" id="5J8A"/>
<dbReference type="PDBsum" id="5J91"/>
<dbReference type="PDBsum" id="5JC9"/>
<dbReference type="PDBsum" id="5JTE"/>
<dbReference type="PDBsum" id="5JU8"/>
<dbReference type="PDBsum" id="5KCR"/>
<dbReference type="PDBsum" id="5KCS"/>
<dbReference type="PDBsum" id="5KPS"/>
<dbReference type="PDBsum" id="5KPV"/>
<dbReference type="PDBsum" id="5KPW"/>
<dbReference type="PDBsum" id="5KPX"/>
<dbReference type="PDBsum" id="5L3P"/>
<dbReference type="PDBsum" id="5LZA"/>
<dbReference type="PDBsum" id="5LZB"/>
<dbReference type="PDBsum" id="5LZC"/>
<dbReference type="PDBsum" id="5LZD"/>
<dbReference type="PDBsum" id="5LZE"/>
<dbReference type="PDBsum" id="5LZF"/>
<dbReference type="PDBsum" id="5MDV"/>
<dbReference type="PDBsum" id="5MDW"/>
<dbReference type="PDBsum" id="5MDY"/>
<dbReference type="PDBsum" id="5MDZ"/>
<dbReference type="PDBsum" id="5MGP"/>
<dbReference type="PDBsum" id="5NCO"/>
<dbReference type="PDBsum" id="5NP6"/>
<dbReference type="PDBsum" id="5NWY"/>
<dbReference type="PDBsum" id="5O2R"/>
<dbReference type="PDBsum" id="5U4I"/>
<dbReference type="PDBsum" id="5U9F"/>
<dbReference type="PDBsum" id="5U9G"/>
<dbReference type="PDBsum" id="5UYK"/>
<dbReference type="PDBsum" id="5UYL"/>
<dbReference type="PDBsum" id="5UYM"/>
<dbReference type="PDBsum" id="5UYN"/>
<dbReference type="PDBsum" id="5UYP"/>
<dbReference type="PDBsum" id="5UYQ"/>
<dbReference type="PDBsum" id="5WDT"/>
<dbReference type="PDBsum" id="5WE4"/>
<dbReference type="PDBsum" id="5WE6"/>
<dbReference type="PDBsum" id="5WF0"/>
<dbReference type="PDBsum" id="5WFK"/>
<dbReference type="PDBsum" id="5WFS"/>
<dbReference type="PDBsum" id="6BU8"/>
<dbReference type="PDBsum" id="6BY1"/>
<dbReference type="PDBsum" id="6C4H"/>
<dbReference type="PDBsum" id="6C4I"/>
<dbReference type="PDBsum" id="6DNC"/>
<dbReference type="PDBsum" id="6ENF"/>
<dbReference type="PDBsum" id="6ENJ"/>
<dbReference type="PDBsum" id="6ENU"/>
<dbReference type="PDBsum" id="6GBZ"/>
<dbReference type="PDBsum" id="6GC0"/>
<dbReference type="PDBsum" id="6GC4"/>
<dbReference type="PDBsum" id="6GC6"/>
<dbReference type="PDBsum" id="6GC7"/>
<dbReference type="PDBsum" id="6GC8"/>
<dbReference type="PDBsum" id="6GWT"/>
<dbReference type="PDBsum" id="6GXM"/>
<dbReference type="PDBsum" id="6GXN"/>
<dbReference type="PDBsum" id="6GXO"/>
<dbReference type="PDBsum" id="6GXP"/>
<dbReference type="PDBsum" id="6H4N"/>
<dbReference type="PDBsum" id="6H58"/>
<dbReference type="PDBsum" id="6HRM"/>
<dbReference type="PDBsum" id="6I0Y"/>
<dbReference type="PDBsum" id="6I7V"/>
<dbReference type="PDBsum" id="6O9J"/>
<dbReference type="PDBsum" id="6O9K"/>
<dbReference type="PDBsum" id="6OFX"/>
<dbReference type="PDBsum" id="6OG7"/>
<dbReference type="PDBsum" id="6OGF"/>
<dbReference type="PDBsum" id="6OGG"/>
<dbReference type="PDBsum" id="6OGI"/>
<dbReference type="PDBsum" id="6OM6"/>
<dbReference type="PDBsum" id="6ORE"/>
<dbReference type="PDBsum" id="6ORL"/>
<dbReference type="PDBsum" id="6OSK"/>
<dbReference type="PDBsum" id="6OSQ"/>
<dbReference type="PDBsum" id="6OST"/>
<dbReference type="PDBsum" id="6OT3"/>
<dbReference type="PDBsum" id="6OUO"/>
<dbReference type="PDBsum" id="6PC5"/>
<dbReference type="PDBsum" id="6PC6"/>
<dbReference type="PDBsum" id="6PC7"/>
<dbReference type="PDBsum" id="6PC8"/>
<dbReference type="PDBsum" id="6PCH"/>
<dbReference type="PDBsum" id="6PCQ"/>
<dbReference type="PDBsum" id="6PCR"/>
<dbReference type="PDBsum" id="6PCS"/>
<dbReference type="PDBsum" id="6PCT"/>
<dbReference type="PDBsum" id="6PJ6"/>
<dbReference type="PDBsum" id="6Q97"/>
<dbReference type="PDBsum" id="6Q98"/>
<dbReference type="PDBsum" id="6Q9A"/>
<dbReference type="PDBsum" id="6QDW"/>
<dbReference type="PDBsum" id="6QUL"/>
<dbReference type="PDBsum" id="6S0K"/>
<dbReference type="PDBsum" id="6SZS"/>
<dbReference type="PDBsum" id="6TBV"/>
<dbReference type="PDBsum" id="6TC3"/>
<dbReference type="PDBsum" id="6U48"/>
<dbReference type="PDBsum" id="6VU3"/>
<dbReference type="PDBsum" id="6VWL"/>
<dbReference type="PDBsum" id="6VWM"/>
<dbReference type="PDBsum" id="6VWN"/>
<dbReference type="PDBsum" id="6VYQ"/>
<dbReference type="PDBsum" id="6VYR"/>
<dbReference type="PDBsum" id="6VYS"/>
<dbReference type="PDBsum" id="6VYT"/>
<dbReference type="PDBsum" id="6VYU"/>
<dbReference type="PDBsum" id="6VYW"/>
<dbReference type="PDBsum" id="6VYX"/>
<dbReference type="PDBsum" id="6VYY"/>
<dbReference type="PDBsum" id="6VYZ"/>
<dbReference type="PDBsum" id="6VZ2"/>
<dbReference type="PDBsum" id="6VZ3"/>
<dbReference type="PDBsum" id="6VZ5"/>
<dbReference type="PDBsum" id="6VZ7"/>
<dbReference type="PDBsum" id="6VZJ"/>
<dbReference type="PDBsum" id="6WD0"/>
<dbReference type="PDBsum" id="6WD1"/>
<dbReference type="PDBsum" id="6WD2"/>
<dbReference type="PDBsum" id="6WD3"/>
<dbReference type="PDBsum" id="6WD4"/>
<dbReference type="PDBsum" id="6WD5"/>
<dbReference type="PDBsum" id="6WD6"/>
<dbReference type="PDBsum" id="6WD7"/>
<dbReference type="PDBsum" id="6WD8"/>
<dbReference type="PDBsum" id="6WD9"/>
<dbReference type="PDBsum" id="6WDA"/>
<dbReference type="PDBsum" id="6WDB"/>
<dbReference type="PDBsum" id="6WDC"/>
<dbReference type="PDBsum" id="6WDD"/>
<dbReference type="PDBsum" id="6WDE"/>
<dbReference type="PDBsum" id="6WDF"/>
<dbReference type="PDBsum" id="6WDG"/>
<dbReference type="PDBsum" id="6WDH"/>
<dbReference type="PDBsum" id="6WDI"/>
<dbReference type="PDBsum" id="6WDJ"/>
<dbReference type="PDBsum" id="6WDK"/>
<dbReference type="PDBsum" id="6WDL"/>
<dbReference type="PDBsum" id="6WDM"/>
<dbReference type="PDBsum" id="6WNT"/>
<dbReference type="PDBsum" id="6WNV"/>
<dbReference type="PDBsum" id="6WNW"/>
<dbReference type="PDBsum" id="6WYV"/>
<dbReference type="PDBsum" id="6X6T"/>
<dbReference type="PDBsum" id="6X7F"/>
<dbReference type="PDBsum" id="6X7K"/>
<dbReference type="PDBsum" id="6X9Q"/>
<dbReference type="PDBsum" id="6XDQ"/>
<dbReference type="PDBsum" id="6XDR"/>
<dbReference type="PDBsum" id="6XGF"/>
<dbReference type="PDBsum" id="6XII"/>
<dbReference type="PDBsum" id="6XIJ"/>
<dbReference type="PDBsum" id="6XZ7"/>
<dbReference type="PDBsum" id="6XZA"/>
<dbReference type="PDBsum" id="6XZB"/>
<dbReference type="PDBsum" id="6Y69"/>
<dbReference type="PDBsum" id="6YS3"/>
<dbReference type="PDBsum" id="6YSR"/>
<dbReference type="PDBsum" id="6YSS"/>
<dbReference type="PDBsum" id="6YST"/>
<dbReference type="PDBsum" id="6YSU"/>
<dbReference type="PDBsum" id="6ZTJ"/>
<dbReference type="PDBsum" id="6ZTL"/>
<dbReference type="PDBsum" id="6ZTM"/>
<dbReference type="PDBsum" id="6ZTN"/>
<dbReference type="PDBsum" id="6ZTO"/>
<dbReference type="PDBsum" id="6ZTP"/>
<dbReference type="PDBsum" id="6ZU1"/>
<dbReference type="PDBsum" id="7ABZ"/>
<dbReference type="PDBsum" id="7AC7"/>
<dbReference type="PDBsum" id="7ACJ"/>
<dbReference type="PDBsum" id="7ACR"/>
<dbReference type="PDBsum" id="7B5K"/>
<dbReference type="PDBsum" id="7BL2"/>
<dbReference type="PDBsum" id="7BL3"/>
<dbReference type="PDBsum" id="7BL4"/>
<dbReference type="PDBsum" id="7BL5"/>
<dbReference type="PDBsum" id="7BL6"/>
<dbReference type="PDBsum" id="7BV8"/>
<dbReference type="PDBsum" id="7D6Z"/>
<dbReference type="PDBsum" id="7D80"/>
<dbReference type="PDBsum" id="7JSS"/>
<dbReference type="PDBsum" id="7JSW"/>
<dbReference type="PDBsum" id="7JSZ"/>
<dbReference type="PDBsum" id="7JT1"/>
<dbReference type="PDBsum" id="7JT2"/>
<dbReference type="PDBsum" id="7JT3"/>
<dbReference type="PDBsum" id="7K00"/>
<dbReference type="PDBsum" id="7K50"/>
<dbReference type="PDBsum" id="7K51"/>
<dbReference type="PDBsum" id="7K52"/>
<dbReference type="PDBsum" id="7K53"/>
<dbReference type="PDBsum" id="7K54"/>
<dbReference type="PDBsum" id="7K55"/>
<dbReference type="PDBsum" id="7LV0"/>
<dbReference type="PDBsum" id="7LVK"/>
<dbReference type="PDBsum" id="7M5D"/>
<dbReference type="PDBsum" id="7N1P"/>
<dbReference type="PDBsum" id="7N2C"/>
<dbReference type="PDBsum" id="7N2U"/>
<dbReference type="PDBsum" id="7N2V"/>
<dbReference type="PDBsum" id="7N30"/>
<dbReference type="PDBsum" id="7N31"/>
<dbReference type="PDBsum" id="7NBU"/>
<dbReference type="PDBsum" id="7NSO"/>
<dbReference type="PDBsum" id="7NSP"/>
<dbReference type="PDBsum" id="7NSQ"/>
<dbReference type="PDBsum" id="7NWT"/>
<dbReference type="PDBsum" id="7NWW"/>
<dbReference type="PDBsum" id="7O19"/>
<dbReference type="PDBsum" id="7O1A"/>
<dbReference type="PDBsum" id="7O1C"/>
<dbReference type="PDBsum" id="7ODE"/>
<dbReference type="PDBsum" id="7OIF"/>
<dbReference type="PDBsum" id="7OIG"/>
<dbReference type="PDBsum" id="7OII"/>
<dbReference type="PDBsum" id="7OIZ"/>
<dbReference type="PDBsum" id="7OJ0"/>
<dbReference type="PDBsum" id="7OT5"/>
<dbReference type="PDBsum" id="7P3K"/>
<dbReference type="PDBsum" id="7PJS"/>
<dbReference type="PDBsum" id="7PJT"/>
<dbReference type="PDBsum" id="7PJU"/>
<dbReference type="PDBsum" id="7PJV"/>
<dbReference type="PDBsum" id="7PJW"/>
<dbReference type="PDBsum" id="7PJX"/>
<dbReference type="PDBsum" id="7PJY"/>
<dbReference type="PDBsum" id="7PJZ"/>
<dbReference type="PDBsum" id="7Q4K"/>
<dbReference type="PDBsum" id="7QG8"/>
<dbReference type="PDBsum" id="7QGH"/>
<dbReference type="PDBsum" id="7QGN"/>
<dbReference type="PDBsum" id="7QGR"/>
<dbReference type="PDBsum" id="7QQ3"/>
<dbReference type="PDBsum" id="7S1G"/>
<dbReference type="PDBsum" id="7S1H"/>
<dbReference type="PDBsum" id="7S1I"/>
<dbReference type="PDBsum" id="7S1J"/>
<dbReference type="PDBsum" id="7S1K"/>
<dbReference type="PDBsum" id="7SA4"/>
<dbReference type="PDBsum" id="7SS9"/>
<dbReference type="PDBsum" id="7SSD"/>
<dbReference type="PDBsum" id="7SSL"/>
<dbReference type="PDBsum" id="7SSN"/>
<dbReference type="PDBsum" id="7SSO"/>
<dbReference type="PDBsum" id="7SSW"/>
<dbReference type="PDBsum" id="7ST2"/>
<dbReference type="PDBsum" id="7ST6"/>
<dbReference type="PDBsum" id="7ST7"/>
<dbReference type="PDBsum" id="7TOS"/>
<dbReference type="PDBsum" id="7UG7"/>
<dbReference type="PDBsum" id="7UPH"/>
<dbReference type="PDBsum" id="7Y7C"/>
<dbReference type="PDBsum" id="7Y7D"/>
<dbReference type="PDBsum" id="7Y7E"/>
<dbReference type="PDBsum" id="7Y7F"/>
<dbReference type="PDBsum" id="7Y7G"/>
<dbReference type="PDBsum" id="7Y7H"/>
<dbReference type="PDBsum" id="7Z20"/>
<dbReference type="PDBsum" id="7ZOD"/>
<dbReference type="PDBsum" id="7ZP8"/>
<dbReference type="PDBsum" id="7ZQ5"/>
<dbReference type="PDBsum" id="7ZQ6"/>
<dbReference type="PDBsum" id="7ZTA"/>
<dbReference type="PDBsum" id="8A3L"/>
<dbReference type="PDBsum" id="8AKN"/>
<dbReference type="PDBsum" id="8AM9"/>
<dbReference type="PDBsum" id="8ANA"/>
<dbReference type="PDBsum" id="8AP4"/>
<dbReference type="PDBsum" id="8AYE"/>
<dbReference type="PDBsum" id="8B0X"/>
<dbReference type="PDBsum" id="8B7Y"/>
<dbReference type="PDBsum" id="8BF7"/>
<dbReference type="PDBsum" id="8BGE"/>
<dbReference type="PDBsum" id="8BGH"/>
<dbReference type="PDBsum" id="8BH4"/>
<dbReference type="PDBsum" id="8BHJ"/>
<dbReference type="PDBsum" id="8BHL"/>
<dbReference type="PDBsum" id="8BHN"/>
<dbReference type="PDBsum" id="8BHP"/>
<dbReference type="PDBsum" id="8BIL"/>
<dbReference type="PDBsum" id="8BIM"/>
<dbReference type="PDBsum" id="8C8X"/>
<dbReference type="PDBsum" id="8C8Y"/>
<dbReference type="PDBsum" id="8C8Z"/>
<dbReference type="PDBsum" id="8C90"/>
<dbReference type="PDBsum" id="8C91"/>
<dbReference type="PDBsum" id="8C92"/>
<dbReference type="PDBsum" id="8C93"/>
<dbReference type="PDBsum" id="8C94"/>
<dbReference type="PDBsum" id="8C96"/>
<dbReference type="PDBsum" id="8C97"/>
<dbReference type="PDBsum" id="8CAM"/>
<dbReference type="PDBsum" id="8CEU"/>
<dbReference type="PDBsum" id="8CGD"/>
<dbReference type="PDBsum" id="8CGK"/>
<dbReference type="PDBsum" id="8CGV"/>
<dbReference type="PDBsum" id="8E30"/>
<dbReference type="PDBsum" id="8E32"/>
<dbReference type="PDBsum" id="8E33"/>
<dbReference type="PDBsum" id="8E35"/>
<dbReference type="PDBsum" id="8E36"/>
<dbReference type="PDBsum" id="8E3L"/>
<dbReference type="PDBsum" id="8E3M"/>
<dbReference type="PDBsum" id="8E3O"/>
<dbReference type="PDBsum" id="8E41"/>
<dbReference type="PDBsum" id="8E42"/>
<dbReference type="PDBsum" id="8E43"/>
<dbReference type="PDBsum" id="8E44"/>
<dbReference type="PDBsum" id="8E45"/>
<dbReference type="PDBsum" id="8E46"/>
<dbReference type="PDBsum" id="8E47"/>
<dbReference type="PDBsum" id="8E48"/>
<dbReference type="PDBsum" id="8E49"/>
<dbReference type="PDBsum" id="8EIU"/>
<dbReference type="PDBsum" id="8EKC"/>
<dbReference type="PDBsum" id="8EMM"/>
<dbReference type="PDBsum" id="8FIZ"/>
<dbReference type="PDBsum" id="8FTO"/>
<dbReference type="PDBsum" id="8FZD"/>
<dbReference type="PDBsum" id="8FZE"/>
<dbReference type="PDBsum" id="8FZF"/>
<dbReference type="PDBsum" id="8FZG"/>
<dbReference type="PDBsum" id="8FZH"/>
<dbReference type="PDBsum" id="8FZI"/>
<dbReference type="PDBsum" id="8FZJ"/>
<dbReference type="PDBsum" id="8G2U"/>
<dbReference type="PDBsum" id="8G31"/>
<dbReference type="PDBsum" id="8G34"/>
<dbReference type="PDBsum" id="8G38"/>
<dbReference type="PDBsum" id="8G6W"/>
<dbReference type="PDBsum" id="8G6X"/>
<dbReference type="PDBsum" id="8G6Y"/>
<dbReference type="PDBsum" id="8G7P"/>
<dbReference type="PDBsum" id="8G7Q"/>
<dbReference type="PDBsum" id="8G7R"/>
<dbReference type="PDBsum" id="8G7S"/>
<dbReference type="PDBsum" id="8HSP"/>
<dbReference type="PDBsum" id="8HTZ"/>
<dbReference type="PDBsum" id="8HU1"/>
<dbReference type="PDBsum" id="8IFB"/>
<dbReference type="PDBsum" id="8IFC"/>
<dbReference type="PDBsum" id="8J1Z"/>
<dbReference type="PDBsum" id="8P16"/>
<dbReference type="PDBsum" id="8P17"/>
<dbReference type="PDBsum" id="8P18"/>
<dbReference type="PDBsum" id="8PEG"/>
<dbReference type="PDBsum" id="8PHJ"/>
<dbReference type="PDBsum" id="8PKL"/>
<dbReference type="PDBsum" id="8PVA"/>
<dbReference type="PDBsum" id="8Q4F"/>
<dbReference type="PDBsum" id="8QBT"/>
<dbReference type="PDBsum" id="8QK7"/>
<dbReference type="PDBsum" id="8QOA"/>
<dbReference type="PDBsum" id="8R6C"/>
<dbReference type="PDBsum" id="8R8M"/>
<dbReference type="PDBsum" id="8RPY"/>
<dbReference type="PDBsum" id="8RPZ"/>
<dbReference type="PDBsum" id="8RQ0"/>
<dbReference type="PDBsum" id="8RQ2"/>
<dbReference type="PDBsum" id="8SYL"/>
<dbReference type="PDBsum" id="8T5D"/>
<dbReference type="PDBsum" id="8T5H"/>
<dbReference type="PDBsum" id="8UPO"/>
<dbReference type="PDBsum" id="8UPR"/>
<dbReference type="PDBsum" id="8UQL"/>
<dbReference type="PDBsum" id="8UQM"/>
<dbReference type="PDBsum" id="8UQP"/>
<dbReference type="PDBsum" id="8UR0"/>
<dbReference type="PDBsum" id="8URH"/>
<dbReference type="PDBsum" id="8URI"/>
<dbReference type="PDBsum" id="8URX"/>
<dbReference type="PDBsum" id="8URY"/>
<dbReference type="PDBsum" id="8VS9"/>
<dbReference type="PDBsum" id="8VSA"/>
<dbReference type="PDBsum" id="8W51"/>
<dbReference type="PDBsum" id="8YUO"/>
<dbReference type="PDBsum" id="8YUP"/>
<dbReference type="PDBsum" id="8YUQ"/>
<dbReference type="PDBsum" id="8YUR"/>
<dbReference type="PDBsum" id="8YUS"/>
<dbReference type="PDBsum" id="9AX8"/>
<dbReference type="PDBsum" id="9CL9"/>
<dbReference type="PDBsum" id="9D89"/>
<dbReference type="PDBsum" id="9DYG"/>
<dbReference type="PDBsum" id="9FBV"/>
<dbReference type="PDBsum" id="9GFT"/>
<dbReference type="PDBsum" id="9GGR"/>
<dbReference type="PDBsum" id="9H3K"/>
<dbReference type="PDBsum" id="9H3L"/>
<dbReference type="PDBsum" id="9H3M"/>
<dbReference type="PDBsum" id="9H3N"/>
<dbReference type="PDBsum" id="9H3O"/>
<dbReference type="PDBsum" id="9H3P"/>
<dbReference type="PDBsum" id="9H3Q"/>
<dbReference type="PDBsum" id="9H3R"/>
<dbReference type="PDBsum" id="9H3S"/>
<dbReference type="PDBsum" id="9H3T"/>
<dbReference type="PDBsum" id="9H3U"/>
<dbReference type="PDBsum" id="9H3V"/>
<dbReference type="PDBsum" id="9H3W"/>
<dbReference type="PDBsum" id="9H3X"/>
<dbReference type="PDBsum" id="9H3Y"/>
<dbReference type="PDBsum" id="9H3Z"/>
<dbReference type="PDBsum" id="9HA1"/>
<dbReference type="PDBsum" id="9HA2"/>
<dbReference type="PDBsum" id="9HA3"/>
<dbReference type="PDBsum" id="9HA4"/>
<dbReference type="PDBsum" id="9HA5"/>
<dbReference type="PDBsum" id="9HA6"/>
<dbReference type="PDBsum" id="9HA7"/>
<dbReference type="PDBsum" id="9HAI"/>
<dbReference type="PDBsum" id="9HAL"/>
<dbReference type="PDBsum" id="9HAM"/>
<dbReference type="PDBsum" id="9MOR"/>
<dbReference type="PDBsum" id="9MQ4"/>
<dbReference type="EMDB" id="EMD-0076"/>
<dbReference type="EMDB" id="EMD-0080"/>
<dbReference type="EMDB" id="EMD-0081"/>
<dbReference type="EMDB" id="EMD-0082"/>
<dbReference type="EMDB" id="EMD-0083"/>
<dbReference type="EMDB" id="EMD-0137"/>
<dbReference type="EMDB" id="EMD-0139"/>
<dbReference type="EMDB" id="EMD-0261"/>
<dbReference type="EMDB" id="EMD-0322"/>
<dbReference type="EMDB" id="EMD-0661"/>
<dbReference type="EMDB" id="EMD-0662"/>
<dbReference type="EMDB" id="EMD-10073"/>
<dbReference type="EMDB" id="EMD-10353"/>
<dbReference type="EMDB" id="EMD-10453"/>
<dbReference type="EMDB" id="EMD-10458"/>
<dbReference type="EMDB" id="EMD-10655"/>
<dbReference type="EMDB" id="EMD-10656"/>
<dbReference type="EMDB" id="EMD-10657"/>
<dbReference type="EMDB" id="EMD-10705"/>
<dbReference type="EMDB" id="EMD-10905"/>
<dbReference type="EMDB" id="EMD-10906"/>
<dbReference type="EMDB" id="EMD-10907"/>
<dbReference type="EMDB" id="EMD-10908"/>
<dbReference type="EMDB" id="EMD-11418"/>
<dbReference type="EMDB" id="EMD-11419"/>
<dbReference type="EMDB" id="EMD-11420"/>
<dbReference type="EMDB" id="EMD-11421"/>
<dbReference type="EMDB" id="EMD-11422"/>
<dbReference type="EMDB" id="EMD-11423"/>
<dbReference type="EMDB" id="EMD-11426"/>
<dbReference type="EMDB" id="EMD-11710"/>
<dbReference type="EMDB" id="EMD-11713"/>
<dbReference type="EMDB" id="EMD-11717"/>
<dbReference type="EMDB" id="EMD-11718"/>
<dbReference type="EMDB" id="EMD-12035"/>
<dbReference type="EMDB" id="EMD-12215"/>
<dbReference type="EMDB" id="EMD-12216"/>
<dbReference type="EMDB" id="EMD-12217"/>
<dbReference type="EMDB" id="EMD-12218"/>
<dbReference type="EMDB" id="EMD-12219"/>
<dbReference type="EMDB" id="EMD-12261"/>
<dbReference type="EMDB" id="EMD-12573"/>
<dbReference type="EMDB" id="EMD-12574"/>
<dbReference type="EMDB" id="EMD-12575"/>
<dbReference type="EMDB" id="EMD-12635"/>
<dbReference type="EMDB" id="EMD-12636"/>
<dbReference type="EMDB" id="EMD-12693"/>
<dbReference type="EMDB" id="EMD-12694"/>
<dbReference type="EMDB" id="EMD-12695"/>
<dbReference type="EMDB" id="EMD-12826"/>
<dbReference type="EMDB" id="EMD-12928"/>
<dbReference type="EMDB" id="EMD-12929"/>
<dbReference type="EMDB" id="EMD-12930"/>
<dbReference type="EMDB" id="EMD-12936"/>
<dbReference type="EMDB" id="EMD-12937"/>
<dbReference type="EMDB" id="EMD-13055"/>
<dbReference type="EMDB" id="EMD-13180"/>
<dbReference type="EMDB" id="EMD-13458"/>
<dbReference type="EMDB" id="EMD-13459"/>
<dbReference type="EMDB" id="EMD-13461"/>
<dbReference type="EMDB" id="EMD-13462"/>
<dbReference type="EMDB" id="EMD-13463"/>
<dbReference type="EMDB" id="EMD-13464"/>
<dbReference type="EMDB" id="EMD-13465"/>
<dbReference type="EMDB" id="EMD-13805"/>
<dbReference type="EMDB" id="EMD-13952"/>
<dbReference type="EMDB" id="EMD-13955"/>
<dbReference type="EMDB" id="EMD-13956"/>
<dbReference type="EMDB" id="EMD-14121"/>
<dbReference type="EMDB" id="EMD-14454"/>
<dbReference type="EMDB" id="EMD-14846"/>
<dbReference type="EMDB" id="EMD-14850"/>
<dbReference type="EMDB" id="EMD-14864"/>
<dbReference type="EMDB" id="EMD-14865"/>
<dbReference type="EMDB" id="EMD-14956"/>
<dbReference type="EMDB" id="EMD-15116"/>
<dbReference type="EMDB" id="EMD-15488"/>
<dbReference type="EMDB" id="EMD-15558"/>
<dbReference type="EMDB" id="EMD-15712"/>
<dbReference type="EMDB" id="EMD-15793"/>
<dbReference type="EMDB" id="EMD-15905"/>
<dbReference type="EMDB" id="EMD-16015"/>
<dbReference type="EMDB" id="EMD-16029"/>
<dbReference type="EMDB" id="EMD-16031"/>
<dbReference type="EMDB" id="EMD-16047"/>
<dbReference type="EMDB" id="EMD-16057"/>
<dbReference type="EMDB" id="EMD-16059"/>
<dbReference type="EMDB" id="EMD-16062"/>
<dbReference type="EMDB" id="EMD-16065"/>
<dbReference type="EMDB" id="EMD-16081"/>
<dbReference type="EMDB" id="EMD-16082"/>
<dbReference type="EMDB" id="EMD-16494"/>
<dbReference type="EMDB" id="EMD-16495"/>
<dbReference type="EMDB" id="EMD-16496"/>
<dbReference type="EMDB" id="EMD-16497"/>
<dbReference type="EMDB" id="EMD-16498"/>
<dbReference type="EMDB" id="EMD-16499"/>
<dbReference type="EMDB" id="EMD-16500"/>
<dbReference type="EMDB" id="EMD-16501"/>
<dbReference type="EMDB" id="EMD-16503"/>
<dbReference type="EMDB" id="EMD-16504"/>
<dbReference type="EMDB" id="EMD-16530"/>
<dbReference type="EMDB" id="EMD-16613"/>
<dbReference type="EMDB" id="EMD-16641"/>
<dbReference type="EMDB" id="EMD-16646"/>
<dbReference type="EMDB" id="EMD-16652"/>
<dbReference type="EMDB" id="EMD-17346"/>
<dbReference type="EMDB" id="EMD-17347"/>
<dbReference type="EMDB" id="EMD-17348"/>
<dbReference type="EMDB" id="EMD-17631"/>
<dbReference type="EMDB" id="EMD-17667"/>
<dbReference type="EMDB" id="EMD-17743"/>
<dbReference type="EMDB" id="EMD-17959"/>
<dbReference type="EMDB" id="EMD-18145"/>
<dbReference type="EMDB" id="EMD-18458"/>
<dbReference type="EMDB" id="EMD-18534"/>
<dbReference type="EMDB" id="EMD-18950"/>
<dbReference type="EMDB" id="EMD-19004"/>
<dbReference type="EMDB" id="EMD-19426"/>
<dbReference type="EMDB" id="EMD-19427"/>
<dbReference type="EMDB" id="EMD-19428"/>
<dbReference type="EMDB" id="EMD-19429"/>
<dbReference type="EMDB" id="EMD-20048"/>
<dbReference type="EMDB" id="EMD-20052"/>
<dbReference type="EMDB" id="EMD-20056"/>
<dbReference type="EMDB" id="EMD-20057"/>
<dbReference type="EMDB" id="EMD-20058"/>
<dbReference type="EMDB" id="EMD-20121"/>
<dbReference type="EMDB" id="EMD-20173"/>
<dbReference type="EMDB" id="EMD-20174"/>
<dbReference type="EMDB" id="EMD-20184"/>
<dbReference type="EMDB" id="EMD-20187"/>
<dbReference type="EMDB" id="EMD-20188"/>
<dbReference type="EMDB" id="EMD-20193"/>
<dbReference type="EMDB" id="EMD-20204"/>
<dbReference type="EMDB" id="EMD-20296"/>
<dbReference type="EMDB" id="EMD-20297"/>
<dbReference type="EMDB" id="EMD-20298"/>
<dbReference type="EMDB" id="EMD-20299"/>
<dbReference type="EMDB" id="EMD-20300"/>
<dbReference type="EMDB" id="EMD-20304"/>
<dbReference type="EMDB" id="EMD-20305"/>
<dbReference type="EMDB" id="EMD-20306"/>
<dbReference type="EMDB" id="EMD-20307"/>
<dbReference type="EMDB" id="EMD-20353"/>
<dbReference type="EMDB" id="EMD-21386"/>
<dbReference type="EMDB" id="EMD-21420"/>
<dbReference type="EMDB" id="EMD-21421"/>
<dbReference type="EMDB" id="EMD-21422"/>
<dbReference type="EMDB" id="EMD-21468"/>
<dbReference type="EMDB" id="EMD-21469"/>
<dbReference type="EMDB" id="EMD-21470"/>
<dbReference type="EMDB" id="EMD-21471"/>
<dbReference type="EMDB" id="EMD-21472"/>
<dbReference type="EMDB" id="EMD-21474"/>
<dbReference type="EMDB" id="EMD-21475"/>
<dbReference type="EMDB" id="EMD-21476"/>
<dbReference type="EMDB" id="EMD-21477"/>
<dbReference type="EMDB" id="EMD-21482"/>
<dbReference type="EMDB" id="EMD-21483"/>
<dbReference type="EMDB" id="EMD-21485"/>
<dbReference type="EMDB" id="EMD-21486"/>
<dbReference type="EMDB" id="EMD-21494"/>
<dbReference type="EMDB" id="EMD-21619"/>
<dbReference type="EMDB" id="EMD-21620"/>
<dbReference type="EMDB" id="EMD-21621"/>
<dbReference type="EMDB" id="EMD-21622"/>
<dbReference type="EMDB" id="EMD-21623"/>
<dbReference type="EMDB" id="EMD-21624"/>
<dbReference type="EMDB" id="EMD-21625"/>
<dbReference type="EMDB" id="EMD-21626"/>
<dbReference type="EMDB" id="EMD-21627"/>
<dbReference type="EMDB" id="EMD-21628"/>
<dbReference type="EMDB" id="EMD-21629"/>
<dbReference type="EMDB" id="EMD-21630"/>
<dbReference type="EMDB" id="EMD-21631"/>
<dbReference type="EMDB" id="EMD-21632"/>
<dbReference type="EMDB" id="EMD-21633"/>
<dbReference type="EMDB" id="EMD-21634"/>
<dbReference type="EMDB" id="EMD-21635"/>
<dbReference type="EMDB" id="EMD-21636"/>
<dbReference type="EMDB" id="EMD-21637"/>
<dbReference type="EMDB" id="EMD-21638"/>
<dbReference type="EMDB" id="EMD-21639"/>
<dbReference type="EMDB" id="EMD-21640"/>
<dbReference type="EMDB" id="EMD-21641"/>
<dbReference type="EMDB" id="EMD-21856"/>
<dbReference type="EMDB" id="EMD-21857"/>
<dbReference type="EMDB" id="EMD-21858"/>
<dbReference type="EMDB" id="EMD-21969"/>
<dbReference type="EMDB" id="EMD-22082"/>
<dbReference type="EMDB" id="EMD-22084"/>
<dbReference type="EMDB" id="EMD-22087"/>
<dbReference type="EMDB" id="EMD-22107"/>
<dbReference type="EMDB" id="EMD-22141"/>
<dbReference type="EMDB" id="EMD-22142"/>
<dbReference type="EMDB" id="EMD-22181"/>
<dbReference type="EMDB" id="EMD-22192"/>
<dbReference type="EMDB" id="EMD-22193"/>
<dbReference type="EMDB" id="EMD-22459"/>
<dbReference type="EMDB" id="EMD-22461"/>
<dbReference type="EMDB" id="EMD-22464"/>
<dbReference type="EMDB" id="EMD-22466"/>
<dbReference type="EMDB" id="EMD-22469"/>
<dbReference type="EMDB" id="EMD-22472"/>
<dbReference type="EMDB" id="EMD-22669"/>
<dbReference type="EMDB" id="EMD-22670"/>
<dbReference type="EMDB" id="EMD-22671"/>
<dbReference type="EMDB" id="EMD-22672"/>
<dbReference type="EMDB" id="EMD-22673"/>
<dbReference type="EMDB" id="EMD-22674"/>
<dbReference type="EMDB" id="EMD-23528"/>
<dbReference type="EMDB" id="EMD-23539"/>
<dbReference type="EMDB" id="EMD-23673"/>
<dbReference type="EMDB" id="EMD-24120"/>
<dbReference type="EMDB" id="EMD-24132"/>
<dbReference type="EMDB" id="EMD-24133"/>
<dbReference type="EMDB" id="EMD-24134"/>
<dbReference type="EMDB" id="EMD-24135"/>
<dbReference type="EMDB" id="EMD-24136"/>
<dbReference type="EMDB" id="EMD-24800"/>
<dbReference type="EMDB" id="EMD-24801"/>
<dbReference type="EMDB" id="EMD-24802"/>
<dbReference type="EMDB" id="EMD-24803"/>
<dbReference type="EMDB" id="EMD-24804"/>
<dbReference type="EMDB" id="EMD-24944"/>
<dbReference type="EMDB" id="EMD-25405"/>
<dbReference type="EMDB" id="EMD-25407"/>
<dbReference type="EMDB" id="EMD-25409"/>
<dbReference type="EMDB" id="EMD-25410"/>
<dbReference type="EMDB" id="EMD-25411"/>
<dbReference type="EMDB" id="EMD-25415"/>
<dbReference type="EMDB" id="EMD-25418"/>
<dbReference type="EMDB" id="EMD-25420"/>
<dbReference type="EMDB" id="EMD-25421"/>
<dbReference type="EMDB" id="EMD-26037"/>
<dbReference type="EMDB" id="EMD-26486"/>
<dbReference type="EMDB" id="EMD-26666"/>
<dbReference type="EMDB" id="EMD-27852"/>
<dbReference type="EMDB" id="EMD-27854"/>
<dbReference type="EMDB" id="EMD-27855"/>
<dbReference type="EMDB" id="EMD-27857"/>
<dbReference type="EMDB" id="EMD-27858"/>
<dbReference type="EMDB" id="EMD-27867"/>
<dbReference type="EMDB" id="EMD-27868"/>
<dbReference type="EMDB" id="EMD-27869"/>
<dbReference type="EMDB" id="EMD-27876"/>
<dbReference type="EMDB" id="EMD-27877"/>
<dbReference type="EMDB" id="EMD-27878"/>
<dbReference type="EMDB" id="EMD-27879"/>
<dbReference type="EMDB" id="EMD-27880"/>
<dbReference type="EMDB" id="EMD-27881"/>
<dbReference type="EMDB" id="EMD-27882"/>
<dbReference type="EMDB" id="EMD-27883"/>
<dbReference type="EMDB" id="EMD-27884"/>
<dbReference type="EMDB" id="EMD-29214"/>
<dbReference type="EMDB" id="EMD-29681"/>
<dbReference type="EMDB" id="EMD-29687"/>
<dbReference type="EMDB" id="EMD-29688"/>
<dbReference type="EMDB" id="EMD-29689"/>
<dbReference type="EMDB" id="EMD-30215"/>
<dbReference type="EMDB" id="EMD-30598"/>
<dbReference type="EMDB" id="EMD-30611"/>
<dbReference type="EMDB" id="EMD-33660"/>
<dbReference type="EMDB" id="EMD-33661"/>
<dbReference type="EMDB" id="EMD-33662"/>
<dbReference type="EMDB" id="EMD-33663"/>
<dbReference type="EMDB" id="EMD-33664"/>
<dbReference type="EMDB" id="EMD-33665"/>
<dbReference type="EMDB" id="EMD-3489"/>
<dbReference type="EMDB" id="EMD-3490"/>
<dbReference type="EMDB" id="EMD-3492"/>
<dbReference type="EMDB" id="EMD-3493"/>
<dbReference type="EMDB" id="EMD-35001"/>
<dbReference type="EMDB" id="EMD-35020"/>
<dbReference type="EMDB" id="EMD-35022"/>
<dbReference type="EMDB" id="EMD-3508"/>
<dbReference type="EMDB" id="EMD-35411"/>
<dbReference type="EMDB" id="EMD-35412"/>
<dbReference type="EMDB" id="EMD-3617"/>
<dbReference type="EMDB" id="EMD-3713"/>
<dbReference type="EMDB" id="EMD-3730"/>
<dbReference type="EMDB" id="EMD-3898"/>
<dbReference type="EMDB" id="EMD-3899"/>
<dbReference type="EMDB" id="EMD-3903"/>
<dbReference type="EMDB" id="EMD-39577"/>
<dbReference type="EMDB" id="EMD-39578"/>
<dbReference type="EMDB" id="EMD-39579"/>
<dbReference type="EMDB" id="EMD-39580"/>
<dbReference type="EMDB" id="EMD-39581"/>
<dbReference type="EMDB" id="EMD-4001"/>
<dbReference type="EMDB" id="EMD-41049"/>
<dbReference type="EMDB" id="EMD-41050"/>
<dbReference type="EMDB" id="EMD-4121"/>
<dbReference type="EMDB" id="EMD-4122"/>
<dbReference type="EMDB" id="EMD-4123"/>
<dbReference type="EMDB" id="EMD-4124"/>
<dbReference type="EMDB" id="EMD-4125"/>
<dbReference type="EMDB" id="EMD-4126"/>
<dbReference type="EMDB" id="EMD-42453"/>
<dbReference type="EMDB" id="EMD-42454"/>
<dbReference type="EMDB" id="EMD-42473"/>
<dbReference type="EMDB" id="EMD-42474"/>
<dbReference type="EMDB" id="EMD-42477"/>
<dbReference type="EMDB" id="EMD-42479"/>
<dbReference type="EMDB" id="EMD-42492"/>
<dbReference type="EMDB" id="EMD-42493"/>
<dbReference type="EMDB" id="EMD-42503"/>
<dbReference type="EMDB" id="EMD-42504"/>
<dbReference type="EMDB" id="EMD-43490"/>
<dbReference type="EMDB" id="EMD-43491"/>
<dbReference type="EMDB" id="EMD-4378"/>
<dbReference type="EMDB" id="EMD-4379"/>
<dbReference type="EMDB" id="EMD-4380"/>
<dbReference type="EMDB" id="EMD-4381"/>
<dbReference type="EMDB" id="EMD-4382"/>
<dbReference type="EMDB" id="EMD-4383"/>
<dbReference type="EMDB" id="EMD-43930"/>
<dbReference type="EMDB" id="EMD-4476"/>
<dbReference type="EMDB" id="EMD-4477"/>
<dbReference type="EMDB" id="EMD-4478"/>
<dbReference type="EMDB" id="EMD-45666"/>
<dbReference type="EMDB" id="EMD-4638"/>
<dbReference type="EMDB" id="EMD-47303"/>
<dbReference type="EMDB" id="EMD-48479"/>
<dbReference type="EMDB" id="EMD-48513"/>
<dbReference type="EMDB" id="EMD-50296"/>
<dbReference type="EMDB" id="EMD-51318"/>
<dbReference type="EMDB" id="EMD-51340"/>
<dbReference type="EMDB" id="EMD-51828"/>
<dbReference type="EMDB" id="EMD-51829"/>
<dbReference type="EMDB" id="EMD-51830"/>
<dbReference type="EMDB" id="EMD-51831"/>
<dbReference type="EMDB" id="EMD-51832"/>
<dbReference type="EMDB" id="EMD-51833"/>
<dbReference type="EMDB" id="EMD-51834"/>
<dbReference type="EMDB" id="EMD-51835"/>
<dbReference type="EMDB" id="EMD-51836"/>
<dbReference type="EMDB" id="EMD-51837"/>
<dbReference type="EMDB" id="EMD-51838"/>
<dbReference type="EMDB" id="EMD-51839"/>
<dbReference type="EMDB" id="EMD-51840"/>
<dbReference type="EMDB" id="EMD-51841"/>
<dbReference type="EMDB" id="EMD-51842"/>
<dbReference type="EMDB" id="EMD-51843"/>
<dbReference type="EMDB" id="EMD-51973"/>
<dbReference type="EMDB" id="EMD-51974"/>
<dbReference type="EMDB" id="EMD-51975"/>
<dbReference type="EMDB" id="EMD-51976"/>
<dbReference type="EMDB" id="EMD-51977"/>
<dbReference type="EMDB" id="EMD-51978"/>
<dbReference type="EMDB" id="EMD-51979"/>
<dbReference type="EMDB" id="EMD-51981"/>
<dbReference type="EMDB" id="EMD-51982"/>
<dbReference type="EMDB" id="EMD-51983"/>
<dbReference type="EMDB" id="EMD-6667"/>
<dbReference type="EMDB" id="EMD-7289"/>
<dbReference type="EMDB" id="EMD-7340"/>
<dbReference type="EMDB" id="EMD-7341"/>
<dbReference type="EMDB" id="EMD-8000"/>
<dbReference type="EMDB" id="EMD-8001"/>
<dbReference type="EMDB" id="EMD-8002"/>
<dbReference type="EMDB" id="EMD-8003"/>
<dbReference type="EMDB" id="EMD-8004"/>
<dbReference type="EMDB" id="EMD-8107"/>
<dbReference type="EMDB" id="EMD-8175"/>
<dbReference type="EMDB" id="EMD-8176"/>
<dbReference type="EMDB" id="EMD-8237"/>
<dbReference type="EMDB" id="EMD-8238"/>
<dbReference type="EMDB" id="EMD-8279"/>
<dbReference type="EMDB" id="EMD-8280"/>
<dbReference type="EMDB" id="EMD-8281"/>
<dbReference type="EMDB" id="EMD-8282"/>
<dbReference type="EMDB" id="EMD-8505"/>
<dbReference type="EMDB" id="EMD-8615"/>
<dbReference type="EMDB" id="EMD-8616"/>
<dbReference type="EMDB" id="EMD-8617"/>
<dbReference type="EMDB" id="EMD-8618"/>
<dbReference type="EMDB" id="EMD-8619"/>
<dbReference type="EMDB" id="EMD-8620"/>
<dbReference type="EMDB" id="EMD-8813"/>
<dbReference type="EMDB" id="EMD-8814"/>
<dbReference type="EMDB" id="EMD-8815"/>
<dbReference type="EMDB" id="EMD-8828"/>
<dbReference type="SMR" id="P60438"/>
<dbReference type="BioGRID" id="4261292">
    <property type="interactions" value="38"/>
</dbReference>
<dbReference type="ComplexPortal" id="CPX-3807">
    <property type="entry name" value="50S large ribosomal subunit"/>
</dbReference>
<dbReference type="DIP" id="DIP-10744N"/>
<dbReference type="FunCoup" id="P60438">
    <property type="interactions" value="1239"/>
</dbReference>
<dbReference type="IntAct" id="P60438">
    <property type="interactions" value="160"/>
</dbReference>
<dbReference type="STRING" id="511145.b3320"/>
<dbReference type="iPTMnet" id="P60438"/>
<dbReference type="jPOST" id="P60438"/>
<dbReference type="PaxDb" id="511145-b3320"/>
<dbReference type="EnsemblBacteria" id="AAC76345">
    <property type="protein sequence ID" value="AAC76345"/>
    <property type="gene ID" value="b3320"/>
</dbReference>
<dbReference type="GeneID" id="86948184"/>
<dbReference type="GeneID" id="947817"/>
<dbReference type="KEGG" id="ecj:JW3282"/>
<dbReference type="KEGG" id="eco:b3320"/>
<dbReference type="KEGG" id="ecoc:C3026_18040"/>
<dbReference type="PATRIC" id="fig|1411691.4.peg.3411"/>
<dbReference type="EchoBASE" id="EB0859"/>
<dbReference type="eggNOG" id="COG0087">
    <property type="taxonomic scope" value="Bacteria"/>
</dbReference>
<dbReference type="HOGENOM" id="CLU_044142_4_1_6"/>
<dbReference type="InParanoid" id="P60438"/>
<dbReference type="OMA" id="GKNIPCT"/>
<dbReference type="OrthoDB" id="9806135at2"/>
<dbReference type="PhylomeDB" id="P60438"/>
<dbReference type="BioCyc" id="EcoCyc:EG10866-MONOMER"/>
<dbReference type="BioCyc" id="MetaCyc:EG10866-MONOMER"/>
<dbReference type="EvolutionaryTrace" id="P60438"/>
<dbReference type="PRO" id="PR:P60438"/>
<dbReference type="Proteomes" id="UP000000625">
    <property type="component" value="Chromosome"/>
</dbReference>
<dbReference type="GO" id="GO:0005737">
    <property type="term" value="C:cytoplasm"/>
    <property type="evidence" value="ECO:0000314"/>
    <property type="project" value="ComplexPortal"/>
</dbReference>
<dbReference type="GO" id="GO:0005829">
    <property type="term" value="C:cytosol"/>
    <property type="evidence" value="ECO:0000314"/>
    <property type="project" value="EcoCyc"/>
</dbReference>
<dbReference type="GO" id="GO:0022625">
    <property type="term" value="C:cytosolic large ribosomal subunit"/>
    <property type="evidence" value="ECO:0000314"/>
    <property type="project" value="CAFA"/>
</dbReference>
<dbReference type="GO" id="GO:0019843">
    <property type="term" value="F:rRNA binding"/>
    <property type="evidence" value="ECO:0007669"/>
    <property type="project" value="UniProtKB-UniRule"/>
</dbReference>
<dbReference type="GO" id="GO:0003735">
    <property type="term" value="F:structural constituent of ribosome"/>
    <property type="evidence" value="ECO:0000314"/>
    <property type="project" value="CAFA"/>
</dbReference>
<dbReference type="GO" id="GO:0002181">
    <property type="term" value="P:cytoplasmic translation"/>
    <property type="evidence" value="ECO:0000303"/>
    <property type="project" value="ComplexPortal"/>
</dbReference>
<dbReference type="GO" id="GO:0000027">
    <property type="term" value="P:ribosomal large subunit assembly"/>
    <property type="evidence" value="ECO:0000314"/>
    <property type="project" value="CAFA"/>
</dbReference>
<dbReference type="FunFam" id="2.40.30.10:FF:000004">
    <property type="entry name" value="50S ribosomal protein L3"/>
    <property type="match status" value="1"/>
</dbReference>
<dbReference type="FunFam" id="3.30.160.810:FF:000001">
    <property type="entry name" value="50S ribosomal protein L3"/>
    <property type="match status" value="1"/>
</dbReference>
<dbReference type="Gene3D" id="3.30.160.810">
    <property type="match status" value="1"/>
</dbReference>
<dbReference type="Gene3D" id="2.40.30.10">
    <property type="entry name" value="Translation factors"/>
    <property type="match status" value="1"/>
</dbReference>
<dbReference type="HAMAP" id="MF_01325_B">
    <property type="entry name" value="Ribosomal_uL3_B"/>
    <property type="match status" value="1"/>
</dbReference>
<dbReference type="InterPro" id="IPR000597">
    <property type="entry name" value="Ribosomal_uL3"/>
</dbReference>
<dbReference type="InterPro" id="IPR019927">
    <property type="entry name" value="Ribosomal_uL3_bac/org-type"/>
</dbReference>
<dbReference type="InterPro" id="IPR019926">
    <property type="entry name" value="Ribosomal_uL3_CS"/>
</dbReference>
<dbReference type="InterPro" id="IPR009000">
    <property type="entry name" value="Transl_B-barrel_sf"/>
</dbReference>
<dbReference type="NCBIfam" id="TIGR03625">
    <property type="entry name" value="L3_bact"/>
    <property type="match status" value="1"/>
</dbReference>
<dbReference type="PANTHER" id="PTHR11229">
    <property type="entry name" value="50S RIBOSOMAL PROTEIN L3"/>
    <property type="match status" value="1"/>
</dbReference>
<dbReference type="PANTHER" id="PTHR11229:SF16">
    <property type="entry name" value="LARGE RIBOSOMAL SUBUNIT PROTEIN UL3C"/>
    <property type="match status" value="1"/>
</dbReference>
<dbReference type="Pfam" id="PF00297">
    <property type="entry name" value="Ribosomal_L3"/>
    <property type="match status" value="1"/>
</dbReference>
<dbReference type="SUPFAM" id="SSF50447">
    <property type="entry name" value="Translation proteins"/>
    <property type="match status" value="1"/>
</dbReference>
<dbReference type="PROSITE" id="PS00474">
    <property type="entry name" value="RIBOSOMAL_L3"/>
    <property type="match status" value="1"/>
</dbReference>
<comment type="function">
    <text evidence="12 15">One of two assembly initiator proteins, it binds directly near the 3'-end of the 23S rRNA, where it nucleates assembly of the 50S subunit.</text>
</comment>
<comment type="subunit">
    <text evidence="1 3 4 6 7 8 9 10 11 14">Part of the 50S ribosomal subunit (PubMed:10094780, PubMed:12809609, PubMed:16272117, PubMed:24844575, PubMed:25310980, PubMed:27906160, PubMed:27906161, PubMed:27934701, PubMed:365579). Forms a cluster with proteins L14 and L19. In pull-down experiments interacts with CedA (PubMed:28818726).</text>
</comment>
<comment type="interaction">
    <interactant intactId="EBI-542200">
        <id>P60438</id>
    </interactant>
    <interactant intactId="EBI-560824">
        <id>P76114</id>
        <label>mcbR</label>
    </interactant>
    <organismsDiffer>false</organismsDiffer>
    <experiments>2</experiments>
</comment>
<comment type="PTM">
    <text evidence="2 13">Methylated by PrmB.</text>
</comment>
<comment type="mass spectrometry"/>
<comment type="similarity">
    <text evidence="17">Belongs to the universal ribosomal protein uL3 family.</text>
</comment>
<protein>
    <recommendedName>
        <fullName evidence="16">Large ribosomal subunit protein uL3</fullName>
    </recommendedName>
    <alternativeName>
        <fullName>50S ribosomal protein L3</fullName>
    </alternativeName>
</protein>
<evidence type="ECO:0000269" key="1">
    <source>
    </source>
</evidence>
<evidence type="ECO:0000269" key="2">
    <source>
    </source>
</evidence>
<evidence type="ECO:0000269" key="3">
    <source>
    </source>
</evidence>
<evidence type="ECO:0000269" key="4">
    <source>
    </source>
</evidence>
<evidence type="ECO:0000269" key="5">
    <source>
    </source>
</evidence>
<evidence type="ECO:0000269" key="6">
    <source>
    </source>
</evidence>
<evidence type="ECO:0000269" key="7">
    <source>
    </source>
</evidence>
<evidence type="ECO:0000269" key="8">
    <source>
    </source>
</evidence>
<evidence type="ECO:0000269" key="9">
    <source>
    </source>
</evidence>
<evidence type="ECO:0000269" key="10">
    <source>
    </source>
</evidence>
<evidence type="ECO:0000269" key="11">
    <source>
    </source>
</evidence>
<evidence type="ECO:0000269" key="12">
    <source>
    </source>
</evidence>
<evidence type="ECO:0000269" key="13">
    <source>
    </source>
</evidence>
<evidence type="ECO:0000269" key="14">
    <source>
    </source>
</evidence>
<evidence type="ECO:0000269" key="15">
    <source>
    </source>
</evidence>
<evidence type="ECO:0000303" key="16">
    <source>
    </source>
</evidence>
<evidence type="ECO:0000305" key="17"/>
<evidence type="ECO:0000305" key="18">
    <source>
    </source>
</evidence>
<evidence type="ECO:0007829" key="19">
    <source>
        <dbReference type="PDB" id="6I0Y"/>
    </source>
</evidence>
<evidence type="ECO:0007829" key="20">
    <source>
        <dbReference type="PDB" id="6WNT"/>
    </source>
</evidence>
<evidence type="ECO:0007829" key="21">
    <source>
        <dbReference type="PDB" id="6XZ7"/>
    </source>
</evidence>
<evidence type="ECO:0007829" key="22">
    <source>
        <dbReference type="PDB" id="7ODE"/>
    </source>
</evidence>
<evidence type="ECO:0007829" key="23">
    <source>
        <dbReference type="PDB" id="8CGK"/>
    </source>
</evidence>
<gene>
    <name type="primary">rplC</name>
    <name type="ordered locus">b3320</name>
    <name type="ordered locus">JW3282</name>
</gene>
<accession>P60438</accession>
<accession>P02386</accession>
<accession>Q2M6Y5</accession>
<feature type="chain" id="PRO_0000077098" description="Large ribosomal subunit protein uL3">
    <location>
        <begin position="1"/>
        <end position="209"/>
    </location>
</feature>
<feature type="modified residue" description="N6-succinyllysine" evidence="5">
    <location>
        <position position="38"/>
    </location>
</feature>
<feature type="modified residue" description="N5-methylglutamine" evidence="14 18">
    <location>
        <position position="150"/>
    </location>
</feature>
<feature type="strand" evidence="23">
    <location>
        <begin position="4"/>
        <end position="15"/>
    </location>
</feature>
<feature type="turn" evidence="21">
    <location>
        <begin position="17"/>
        <end position="19"/>
    </location>
</feature>
<feature type="strand" evidence="23">
    <location>
        <begin position="21"/>
        <end position="28"/>
    </location>
</feature>
<feature type="strand" evidence="23">
    <location>
        <begin position="32"/>
        <end position="38"/>
    </location>
</feature>
<feature type="helix" evidence="23">
    <location>
        <begin position="40"/>
        <end position="43"/>
    </location>
</feature>
<feature type="strand" evidence="23">
    <location>
        <begin position="47"/>
        <end position="51"/>
    </location>
</feature>
<feature type="turn" evidence="23">
    <location>
        <begin position="57"/>
        <end position="59"/>
    </location>
</feature>
<feature type="helix" evidence="23">
    <location>
        <begin position="62"/>
        <end position="71"/>
    </location>
</feature>
<feature type="strand" evidence="23">
    <location>
        <begin position="80"/>
        <end position="83"/>
    </location>
</feature>
<feature type="turn" evidence="19">
    <location>
        <begin position="91"/>
        <end position="93"/>
    </location>
</feature>
<feature type="helix" evidence="23">
    <location>
        <begin position="98"/>
        <end position="101"/>
    </location>
</feature>
<feature type="turn" evidence="22">
    <location>
        <begin position="102"/>
        <end position="104"/>
    </location>
</feature>
<feature type="strand" evidence="23">
    <location>
        <begin position="106"/>
        <end position="112"/>
    </location>
</feature>
<feature type="strand" evidence="23">
    <location>
        <begin position="115"/>
        <end position="119"/>
    </location>
</feature>
<feature type="helix" evidence="23">
    <location>
        <begin position="121"/>
        <end position="125"/>
    </location>
</feature>
<feature type="strand" evidence="20">
    <location>
        <begin position="132"/>
        <end position="135"/>
    </location>
</feature>
<feature type="strand" evidence="23">
    <location>
        <begin position="140"/>
        <end position="142"/>
    </location>
</feature>
<feature type="turn" evidence="21">
    <location>
        <begin position="150"/>
        <end position="152"/>
    </location>
</feature>
<feature type="strand" evidence="23">
    <location>
        <begin position="162"/>
        <end position="166"/>
    </location>
</feature>
<feature type="strand" evidence="23">
    <location>
        <begin position="168"/>
        <end position="181"/>
    </location>
</feature>
<feature type="turn" evidence="23">
    <location>
        <begin position="182"/>
        <end position="185"/>
    </location>
</feature>
<feature type="strand" evidence="23">
    <location>
        <begin position="186"/>
        <end position="191"/>
    </location>
</feature>
<feature type="strand" evidence="23">
    <location>
        <begin position="200"/>
        <end position="205"/>
    </location>
</feature>
<proteinExistence type="evidence at protein level"/>
<name>RL3_ECOLI</name>